<comment type="function">
    <molecule>Mature core protein</molecule>
    <text evidence="3 5 6 7 12 20">Packages viral RNA to form a viral nucleocapsid, and promotes virion budding (Probable). Participates in the viral particle production as a result of its interaction with the non-structural protein 5A (By similarity). Binds RNA and may function as a RNA chaperone to induce the RNA structural rearrangements taking place during virus replication (By similarity). Modulates viral translation initiation by interacting with viral IRES and 40S ribosomal subunit (By similarity). Affects various cell signaling pathways, host immunity and lipid metabolism (Probable). Prevents the establishment of cellular antiviral state by blocking the interferon-alpha/beta (IFN-alpha/beta) and IFN-gamma signaling pathways and by blocking the formation of phosphorylated STAT1 and promoting ubiquitin-mediated proteasome-dependent degradation of STAT1 (By similarity). Activates STAT3 leading to cellular transformation (By similarity). Regulates the activity of cellular genes, including c-myc and c-fos (By similarity). May repress the promoter of p53, and sequester CREB3 and SP110 isoform 3/Sp110b in the cytoplasm (By similarity). Represses cell cycle negative regulating factor CDKN1A, thereby interrupting an important check point of normal cell cycle regulation (By similarity). Targets transcription factors involved in the regulation of inflammatory responses and in the immune response: suppresses TNF-induced NF-kappa-B activation, and activates AP-1 (By similarity). Binds to dendritic cells (DCs) via C1QR1, resulting in down-regulation of T-lymphocytes proliferation (By similarity). Alters lipid metabolism by interacting with hepatocellular proteins involved in lipid accumulation and storage (By similarity). Induces up-regulation of FAS promoter activity, and thereby contributes to the increased triglyceride accumulation in hepatocytes (steatosis) (By similarity).</text>
</comment>
<comment type="function">
    <molecule>Envelope glycoprotein E1</molecule>
    <text evidence="6">Forms a heterodimer with envelope glycoprotein E2, which mediates virus attachment to the host cell, virion internalization through clathrin-dependent endocytosis and fusion with host membrane (By similarity). Fusion with the host cell is most likely mediated by both E1 and E2, through conformational rearrangements of the heterodimer required for fusion rather than a classical class II fusion mechanism (By similarity). E1/E2 heterodimer binds host apolipoproteins such as APOB and ApoE thereby forming a lipo-viro-particle (LVP) (By similarity). APOE associated to the LVP allows the initial virus attachment to cell surface receptors such as the heparan sulfate proteoglycans (HSPGs), syndecan-1 (SDC1), syndecan-1 (SDC2), the low-density lipoprotein receptor (LDLR) and scavenger receptor class B type I (SCARB1) (By similarity). The cholesterol transfer activity of SCARB1 allows E2 exposure and binding of E2 to SCARB1 and the tetraspanin CD81 (By similarity). E1/E2 heterodimer binding on CD81 activates the epithelial growth factor receptor (EGFR) signaling pathway (By similarity). Diffusion of the complex E1-E2-EGFR-SCARB1-CD81 to the cell lateral membrane allows further interaction with Claudin 1 (CLDN1) and occludin (OCLN) to finally trigger HCV entry (By similarity).</text>
</comment>
<comment type="function">
    <molecule>Envelope glycoprotein E2</molecule>
    <text evidence="5 6">Forms a heterodimer with envelope glycoprotein E1, which mediates virus attachment to the host cell, virion internalization through clathrin-dependent endocytosis and fusion with host membrane (By similarity). Fusion with the host cell is most likely mediated by both E1 and E2, through conformational rearrangements of the heterodimer required for fusion rather than a classical class II fusion mechanism (By similarity). The interaction between envelope glycoprotein E2 and host apolipoprotein E/APOE allows the proper assembly, maturation and infectivity of the viral particles (By similarity). This interaction is probably promoted via the up-regulation of cellular autophagy by the virus (By similarity). E1/E2 heterodimer binds host apolipoproteins such as APOB and APOE thereby forming a lipo-viro-particle (LVP) (By similarity). APOE associated to the LVP allows the initial virus attachment to cell surface receptors such as the heparan sulfate proteoglycans (HSPGs), syndecan-1 (SDC1), syndecan-1 (SDC2), the low-density lipoprotein receptor (LDLR) and scavenger receptor class B type I (SCARB1) (By similarity). The cholesterol transfer activity of SCARB1 allows E2 exposure and binding of E2 to SCARB1 and the tetraspanin CD81 (By similarity). E1/E2 heterodimer binding on CD81 activates the epithelial growth factor receptor (EGFR) signaling pathway (By similarity). Diffusion of the complex E1-E2-EGFR-SCARB1-CD81 to the cell lateral membrane allows further interaction with Claudin 1 (CLDN1) and occludin (OCLN) to finally trigger HCV entry (By similarity). Inhibits host EIF2AK2/PKR activation, preventing the establishment of an antiviral state (By similarity). Viral ligand for CD209/DC-SIGN and CLEC4M/DC-SIGNR, which are respectively found on dendritic cells (DCs), and on liver sinusoidal endothelial cells and macrophage-like cells of lymph node sinuses (By similarity). These interactions allow the capture of circulating HCV particles by these cells and subsequent facilitated transmission to permissive cells such as hepatocytes and lymphocyte subpopulations (By similarity). The interaction between E2 and host amino acid transporter complex formed by SLC3A2 and SLC7A5/LAT1 may facilitate viral entry into host cell (By similarity).</text>
</comment>
<comment type="function">
    <molecule>Viroporin p7</molecule>
    <text evidence="6 12 20">Ion channel protein that acts as a viroporin and plays an essential role in the assembly, envelopment and secretion of viral particles (By similarity). Regulates the host cell secretory pathway, which induces the intracellular retention of viral glycoproteins and favors assembly of viral particles (By similarity). Creates a pore in acidic organelles and releases Ca(2+) and H(+) in the cytoplasm of infected cells, leading to a productive viral infection (By similarity). High levels of cytoplasmic Ca(2+) may trigger membrane trafficking and transport of viral ER-associated proteins to viroplasms, sites of viral genome replication (Probable). This ionic imbalance induces the assembly of the inflammasome complex, which triggers the maturation of pro-IL-1beta into IL-1beta through the action of caspase-1 (By similarity). Targets also host mitochondria and induces mitochondrial depolarization (By similarity). In addition of its role as a viroporin, acts as a lipid raft adhesion factor (By similarity).</text>
</comment>
<comment type="function">
    <molecule>Protease NS2</molecule>
    <text evidence="4 6">Cysteine protease required for the proteolytic auto-cleavage between the non-structural proteins NS2 and NS3 (By similarity). The N-terminus of NS3 is required for the function of NS2 protease (active region NS2-3) (By similarity). Promotes the initiation of viral particle assembly by mediating the interaction between structural and non-structural proteins (By similarity).</text>
</comment>
<comment type="function">
    <molecule>Serine protease/helicase NS3</molecule>
    <text evidence="6 13">Displays three enzymatic activities: serine protease with a chymotrypsin-like fold, NTPase and RNA helicase (By similarity). NS3 serine protease, in association with NS4A, is responsible for the cleavages of NS3-NS4A, NS4A-NS4B, NS4B-NS5A and NS5A-NS5B (By similarity). The NS3/NS4A complex prevents phosphorylation of host IRF3, thus preventing the establishment of dsRNA induced antiviral state (By similarity). The NS3/NS4A complex induces host amino acid transporter component SLC3A2, thus contributing to HCV propagation (By similarity). NS3 RNA helicase binds to RNA and unwinds both dsDNA and dsRNA in the 3' to 5' direction, and likely resolves RNA complicated stable secondary structures in the template strand (By similarity). Binds a single ATP and catalyzes the unzipping of a single base pair of dsRNA (By similarity). Inhibits host antiviral proteins TBK1 and IRF3 thereby preventing the establishment of an antiviral state (By similarity). Cleaves host MAVS/CARDIF thereby preventing the establishment of an antiviral state (By similarity). Cleaves host TICAM1/TRIF, thereby disrupting TLR3 signaling and preventing the establishment of an antiviral state (By similarity).</text>
</comment>
<comment type="function">
    <molecule>Non-structural protein 4B</molecule>
    <text evidence="6">Induces a specific membrane alteration that serves as a scaffold for the virus replication complex (By similarity). This membrane alteration gives rise to the so-called ER-derived membranous web that contains the replication complex (By similarity). NS4B self-interaction contributes to its function in membranous web formation (By similarity). Promotes host TRIF protein degradation in a CASP8-dependent manner thereby inhibiting host TLR3-mediated interferon signaling (By similarity). Disrupts the interaction between STING and TBK1 contributing to the inhibition of interferon signaling (By similarity).</text>
</comment>
<comment type="function">
    <molecule>Non-structural protein 5A</molecule>
    <text evidence="3 5 6 12 13">Phosphorylated protein that is indispensable for viral replication and assembly (By similarity). Both hypo- and hyperphosphorylated states are required for the viral life cycle (By similarity). The hyperphosphorylated form of NS5A is an inhibitor of viral replication (By similarity). Involved in RNA-binding and especially in binding to the viral genome (By similarity). Zinc is essential for RNA-binding (By similarity). Participates in the viral particle production as a result of its interaction with the mature viral core protein (By similarity). Its interaction with host VAPB may target the viral replication complex to vesicles (By similarity). Down-regulates viral IRES translation initiation (By similarity). Mediates interferon resistance, presumably by interacting with and inhibiting host EIF2AK2/PKR (By similarity). Prevents BIN1-induced apoptosis (By similarity). Acts as a transcriptional activator of some host genes important for viral replication when localized in the nucleus (By similarity). Via the interaction with host PACSIN2, modulates lipid droplet formation in order to promote virion assembly (By similarity). Modulates TNFRSF21/DR6 signaling pathway for viral propagation (By similarity).</text>
</comment>
<comment type="function">
    <molecule>RNA-directed RNA polymerase</molecule>
    <text evidence="6">RNA-dependent RNA polymerase that performs primer-template recognition and RNA synthesis during viral replication. Initiates RNA transcription/replication at a flavin adenine dinucleotide (FAD), resulting in a 5'- FAD cap on viral RNAs. In this way, recognition of viral 5' RNA by host pattern recognition receptors can be bypassed, thereby evading activation of antiviral pathways.</text>
</comment>
<comment type="catalytic activity">
    <molecule>Serine protease/helicase NS3</molecule>
    <reaction evidence="6">
        <text>Hydrolysis of four peptide bonds in the viral precursor polyprotein, commonly with Asp or Glu in the P6 position, Cys or Thr in P1 and Ser or Ala in P1'.</text>
        <dbReference type="EC" id="3.4.21.98"/>
    </reaction>
</comment>
<comment type="catalytic activity">
    <molecule>Serine protease/helicase NS3</molecule>
    <reaction evidence="6">
        <text>a ribonucleoside 5'-triphosphate + H2O = a ribonucleoside 5'-diphosphate + phosphate + H(+)</text>
        <dbReference type="Rhea" id="RHEA:23680"/>
        <dbReference type="ChEBI" id="CHEBI:15377"/>
        <dbReference type="ChEBI" id="CHEBI:15378"/>
        <dbReference type="ChEBI" id="CHEBI:43474"/>
        <dbReference type="ChEBI" id="CHEBI:57930"/>
        <dbReference type="ChEBI" id="CHEBI:61557"/>
        <dbReference type="EC" id="3.6.1.15"/>
    </reaction>
</comment>
<comment type="catalytic activity">
    <molecule>Serine protease/helicase NS3</molecule>
    <reaction evidence="6">
        <text>ATP + H2O = ADP + phosphate + H(+)</text>
        <dbReference type="Rhea" id="RHEA:13065"/>
        <dbReference type="ChEBI" id="CHEBI:15377"/>
        <dbReference type="ChEBI" id="CHEBI:15378"/>
        <dbReference type="ChEBI" id="CHEBI:30616"/>
        <dbReference type="ChEBI" id="CHEBI:43474"/>
        <dbReference type="ChEBI" id="CHEBI:456216"/>
        <dbReference type="EC" id="3.6.4.13"/>
    </reaction>
</comment>
<comment type="catalytic activity">
    <molecule>RNA-directed RNA polymerase</molecule>
    <reaction evidence="15">
        <text>RNA(n) + a ribonucleoside 5'-triphosphate = RNA(n+1) + diphosphate</text>
        <dbReference type="Rhea" id="RHEA:21248"/>
        <dbReference type="Rhea" id="RHEA-COMP:14527"/>
        <dbReference type="Rhea" id="RHEA-COMP:17342"/>
        <dbReference type="ChEBI" id="CHEBI:33019"/>
        <dbReference type="ChEBI" id="CHEBI:61557"/>
        <dbReference type="ChEBI" id="CHEBI:140395"/>
        <dbReference type="EC" id="2.7.7.48"/>
    </reaction>
</comment>
<comment type="cofactor">
    <molecule>Protease NS2</molecule>
    <cofactor evidence="4">
        <name>Zn(2+)</name>
        <dbReference type="ChEBI" id="CHEBI:29105"/>
    </cofactor>
    <text evidence="4">Activity of protease NS2 is dependent on zinc ions and completely inhibited by EDTA. This is probably due to the fact that NS2 protease activity needs NS3 N-terminus that binds a zinc atom (active region NS2-3).</text>
</comment>
<comment type="cofactor">
    <molecule>Serine protease/helicase NS3</molecule>
    <cofactor evidence="4">
        <name>Zn(2+)</name>
        <dbReference type="ChEBI" id="CHEBI:29105"/>
    </cofactor>
    <cofactor evidence="13">
        <name>Mg(2+)</name>
        <dbReference type="ChEBI" id="CHEBI:18420"/>
    </cofactor>
    <text evidence="4 13">Binds 1 zinc ion, which has a structural role (By similarity). The magnesium ion is essential for the helicase activity (By similarity).</text>
</comment>
<comment type="cofactor">
    <molecule>RNA-directed RNA polymerase</molecule>
    <cofactor evidence="4">
        <name>Mg(2+)</name>
        <dbReference type="ChEBI" id="CHEBI:18420"/>
    </cofactor>
    <text evidence="4">Binds 2 magnesium ion that constitute a dinuclear catalytic metal center.</text>
</comment>
<comment type="activity regulation">
    <text evidence="3 6">Inhibited by the antiviral drug hexamethylene amiloride (By similarity). Inhibition by amantadine appears to be genotype-dependent (By similarity). Also inhibited by long-alkyl-chain iminosugar derivatives (By similarity).</text>
</comment>
<comment type="activity regulation">
    <molecule>RNA-directed RNA polymerase</molecule>
    <text evidence="6">Activity is up-regulated by PRK2/PKN2-mediated phosphorylation.</text>
</comment>
<comment type="subunit">
    <molecule>Mature core protein</molecule>
    <text evidence="3 5 6 7 9 10 12">Homooligomer (By similarity). Interacts with E1 (via C-terminus) (By similarity). Interacts with the non-structural protein 5A (By similarity). Interacts (via N-terminus) with host STAT1 (via SH2 domain); this interaction results in decreased STAT1 phosphorylation and ubiquitin-mediated proteasome-dependent STAT1 degradation, leading to decreased IFN-stimulated gene transcription (By similarity). Interacts with host STAT3; this interaction constitutively activates STAT3 (By similarity). Interacts with host LTBR receptor (By similarity). Interacts with host TNFRSF1A receptor and possibly induces apoptosis (By similarity). Interacts with host HNRPK (By similarity). Interacts with host YWHAE (By similarity). Interacts with host UBE3A/E6AP (By similarity). Interacts with host DDX3X (By similarity). Interacts with host APOA2 (By similarity). Interacts with host RXRA protein (By similarity). Interacts with host SP110 isoform 3/Sp110b; this interaction sequesters the transcriptional corepressor SP110 away from the nucleus (By similarity). Interacts with host CREB3 nuclear transcription protein; this interaction triggers cell transformation (By similarity). Interacts with host ACY3 (By similarity). Interacts with host C1QR1 (By similarity). Interacts with host RBM24; this interaction, which enhances the interaction of the mature core protein with 5'-UTR, may inhibit viral translation and favor replication (By similarity). Interacts with host EIF2AK2/PKR; this interaction induces the autophosphorylation of EIF2AK2 (By similarity). Part of the viral assembly initiation complex composed of NS2, E1, E2, NS3, NS4A, NS5A and the mature core protein (By similarity).</text>
</comment>
<comment type="subunit">
    <molecule>Envelope glycoprotein E1</molecule>
    <text evidence="6 12">Forms a heterodimer with envelope glycoprotein E2 (By similarity). Interacts with mature core protein (By similarity). Interacts with protease NS2 (By similarity). The heterodimer E1/E2 interacts with host CLDN1; this interaction plays a role in viral entry into host cell (By similarity). Interacts with host SPSB2 (via C-terminus) (By similarity). Part of the viral assembly initiation complex composed of NS2, E1, E2, NS3, NS4A, NS5A and the mature core protein (By similarity). Interacts with host NEURL3; this interaction prevents E1 binding to glycoprotein E2 (By similarity).</text>
</comment>
<comment type="subunit">
    <molecule>Envelope glycoprotein E2</molecule>
    <text evidence="6 12 13">Forms a heterodimer with envelope glycoprotein E1 (By similarity). Interacts with host CD81 and SCARB1 receptors; these interactions play a role in viral entry into host cell (By similarity). Interacts with host EIF2AK2/PKR; this interaction inhibits EIF2AK2 and probably allows the virus to evade the innate immune response (By similarity). Interacts with host CD209/DC-SIGN and CLEC4M/DC-SIGNR (By similarity). Interact with host SPCS1; this interaction is essential for viral particle assembly (By similarity). Interacts with protease NS2 (By similarity). The heterodimer E1/E2 interacts with host CLDN1; this interaction plays a role in viral entry into host cell (By similarity). Part of the viral assembly initiation complex composed of NS2, E1, E2, NS3, NS4A, NS5A and the mature core protein (By similarity). Interacts with host SLC3A2/4F2hc; the interaction may facilitate viral entry into host cell (By similarity). Interacts with human PLSCR1 (By similarity).</text>
</comment>
<comment type="subunit">
    <molecule>Viroporin p7</molecule>
    <text evidence="2 6 12">Homohexamer (By similarity). Homoheptamer (By similarity). Interacts with protease NS2 (By similarity).</text>
</comment>
<comment type="subunit">
    <molecule>Protease NS2</molecule>
    <text evidence="6 12">Homodimer (By similarity). Interacts with host SPCS1; this interaction is essential for viral particle assembly (By similarity). Interacts with envelope glycoprotein E1 (By similarity). Interacts with envelope glycoprotein E2 (By similarity). Interacts with viroporin p7 (By similarity). Interacts with serine protease/helicase NS3 (By similarity). Part of the replication complex composed of NS2, NS3, NS4A, NS4B, NS5A and the RNA-directed RNA polymerase embedded in an ER-derived membranous web (By similarity). Part of the viral assembly initiation complex composed of NS2, E1, E2, NS3, NS4A, NS5A and the mature core protein (By similarity).</text>
</comment>
<comment type="subunit">
    <molecule>Serine protease/helicase NS3</molecule>
    <text evidence="4 6 12 13">Interacts with protease NS2 (By similarity). Interacts with non-structural protein 4A; this interaction stabilizes the folding of NS3 serine protease (By similarity). NS3-NS4A interaction is essential for NS3 activation and allows membrane anchorage of the latter (By similarity). NS3/NS4A complex also prevents phosphorylation of host IRF3, thus preventing the establishment of dsRNA induced antiviral state (By similarity). Interacts with host MAVS; this interaction leads to the cleavage and inhibition of host MAVS (By similarity). Interacts with host TICAM1; this interaction leads to the cleavage and inhibition of host TICAM1 (By similarity). Interacts with host TANK-binding kinase/TBK1; this interaction results in the inhibition of the association between TBK1 and IRF3, which leads to the inhibition of IRF3 activation (By similarity). Interacts with host RBM24 (By similarity). Part of the replication complex composed of NS2, NS3, NS4A, NS4B, NS5A and the RNA-directed RNA polymerase embedded in an ER-derived membranous web (By similarity). Part of the viral assembly initiation complex composed of NS2, E1, E2, NS3, NS4A, NS5A and the mature core protein (By similarity).</text>
</comment>
<comment type="subunit">
    <molecule>Non-structural protein 4A</molecule>
    <text evidence="3 4 6 12">Interacts with NS3 serine protease; this interaction stabilizes the folding of NS3 serine protease (By similarity). NS3-NS4A interaction is essential for NS3 activation and allows membrane anchorage of the latter (By similarity). Interacts with non-structural protein 5A (via N-terminus) (By similarity). Part of the replication complex composed of NS2, NS3, NS4A, NS4B, NS5A and the RNA-directed RNA polymerase embedded in an ER-derived membranous web (By similarity). Part of the viral assembly initiation complex composed of NS2, E1, E2, NS3, NS4A, NS5A and the mature core protein (By similarity).</text>
</comment>
<comment type="subunit">
    <molecule>Non-structural protein 4B</molecule>
    <text evidence="6 12">Homomultimer (By similarity). Interacts with non-structural protein NS5A (By similarity). Interacts with host PLA2G4C; this interaction likely initiates the recruitment of replication complexes to lipid droplets (By similarity). Interacts with host STING; this interaction disrupts the interaction between STING and TBK1 thereby suppressing the interferon signaling (By similarity). Part of the replication complex composed of NS2, NS3, NS4A, NS4B, NS5A and the RNA-directed RNA polymerase embedded in an ER-derived membranous web (By similarity).</text>
</comment>
<comment type="subunit">
    <molecule>Non-structural protein 5A</molecule>
    <text evidence="3 4 5 6 12">Monomer. Homodimer; dimerization is required for RNA-binding (By similarity). Interacts with the mature core protein (By similarity). Interacts (via N-terminus) with non-structural protein 4A (By similarity). Interacts with non-structural protein 4B. Interacts (via region D2) with RNA-directed RNA polymerase (By similarity). Part of the viral assembly initiation complex composed of NS2, E1, E2, NS3, NS4A, NS5A and the mature core protein (By similarity). Part of the replication complex composed of NS2, NS3, NS4A, NS4B, NS5A and the RNA-directed RNA polymerase embedded in an ER-derived membranous web (By similarity). Interacts with host GRB2 (By similarity). Interacts with host BIN1 (By similarity). Interacts with host PIK3R1 (By similarity). Interacts with host SRCAP (By similarity). Interacts with host FKBP8 (By similarity). Interacts (via C-terminus) with host VAPB (via MSP domain). Interacts with host EIF2AK2/PKR; this interaction leads to disruption of EIF2AK2 dimerization by NS5A and probably allows the virus to evade the innate immune response. Interacts (via N-terminus) with host PACSIN2 (via N-terminus); this interaction attenuates protein kinase C alpha-mediated phosphorylation of PACSIN2 by disrupting the interaction between PACSIN2 and PRKCA (By similarity). Interacts (via N-terminus) with host SRC kinase (via SH2 domain) (By similarity). Interacts with most Src-family kinases (By similarity). Interacts with host IFI27 and SKP2; promotes the ubiquitin-mediated proteasomal degradation of NS5A (By similarity). Interacts with host GPS2 (By similarity). Interacts with host TNFRSF21; this interaction allows the modulation by the virus of JNK, p38 MAPK, STAT3, and Akt signaling pathways in a DR6-dependent manner. Interacts (via N-terminus) with host CIDEB (via N-terminus); this interaction seems to regulate the association of HCV particles with APOE (By similarity). Interacts with host CHKA/Choline Kinase-alpha; CHKA bridges host PI4KA and NS5A and potentiates NS5A-stimulated PI4KA activity, which then facilitates the targeting of the ternary complex to the ER for viral replication (By similarity). Interacts with host SPSB2 (via C-terminus); this interaction targets NS5A for ubiquitination and degradation (By similarity). Interacts with host RAB18; this interaction may promote the association of NS5A and other replicase components with lipid droplets (By similarity). Interacts (via region D2) with host PPIA/CYPA; the interaction stimulates RNA-binding ability of NS5A and is dependent on the peptidyl-prolyl cis-trans isomerase activity of PPIA/CYPA. Interacts with host TRIM14; this interaction induces the degradation of NS5A (By similarity).</text>
</comment>
<comment type="subunit">
    <molecule>RNA-directed RNA polymerase</molecule>
    <text evidence="6">Homooligomer (By similarity). Interacts with non-structural protein 5A (By similarity). Interacts with host VAPB (By similarity). Interacts with host PRK2/PKN2 (By similarity). Interacts with host HNRNPA1 and SEPT6; these interactions facilitate viral replication (By similarity). Part of the replication complex composed of NS2, NS3, NS4A, NS4B, NS5A and the RNA-directed RNA polymerase (By similarity).</text>
</comment>
<comment type="subcellular location">
    <molecule>Core protein precursor</molecule>
    <subcellularLocation>
        <location evidence="5">Host endoplasmic reticulum membrane</location>
        <topology evidence="14">Single-pass membrane protein</topology>
    </subcellularLocation>
    <subcellularLocation>
        <location evidence="5">Host mitochondrion membrane</location>
        <topology evidence="14">Single-pass type I membrane protein</topology>
    </subcellularLocation>
    <text>The C-terminal transmembrane domain of the core protein precursor contains an ER signal leading the nascent polyprotein to the ER membrane.</text>
</comment>
<comment type="subcellular location">
    <molecule>Mature core protein</molecule>
    <subcellularLocation>
        <location evidence="12">Virion</location>
    </subcellularLocation>
    <subcellularLocation>
        <location evidence="12">Host cytoplasm</location>
    </subcellularLocation>
    <subcellularLocation>
        <location evidence="3">Host nucleus</location>
    </subcellularLocation>
    <subcellularLocation>
        <location evidence="12">Host lipid droplet</location>
    </subcellularLocation>
    <text evidence="6">Only a minor proportion of core protein is present in the nucleus (By similarity). Probably present on the surface of lipid droplets (By similarity).</text>
</comment>
<comment type="subcellular location">
    <molecule>Envelope glycoprotein E1</molecule>
    <subcellularLocation>
        <location evidence="20">Virion membrane</location>
        <topology evidence="20">Single-pass type I membrane protein</topology>
    </subcellularLocation>
    <subcellularLocation>
        <location>Host endoplasmic reticulum membrane</location>
        <topology evidence="6">Single-pass type I membrane protein</topology>
    </subcellularLocation>
    <text evidence="6">The C-terminal transmembrane domain acts as a signal sequence and forms a hairpin structure before cleavage by host signal peptidase (By similarity). After cleavage, the membrane sequence is retained at the C-terminus of the protein, serving as ER membrane anchor (By similarity). A reorientation of the second hydrophobic stretch occurs after cleavage producing a single reoriented transmembrane domain (By similarity). These events explain the final topology of the protein (By similarity).</text>
</comment>
<comment type="subcellular location">
    <molecule>Envelope glycoprotein E2</molecule>
    <subcellularLocation>
        <location evidence="20">Virion membrane</location>
        <topology evidence="20">Single-pass type I membrane protein</topology>
    </subcellularLocation>
    <subcellularLocation>
        <location>Host endoplasmic reticulum membrane</location>
        <topology evidence="6">Single-pass type I membrane protein</topology>
    </subcellularLocation>
    <subcellularLocation>
        <location evidence="13">Host lipid droplet</location>
    </subcellularLocation>
    <text evidence="6">The C-terminal transmembrane domain acts as a signal sequence and forms a hairpin structure before cleavage by host signal peptidase (By similarity). After cleavage, the membrane sequence is retained at the C-terminus of the protein, serving as ER membrane anchor (By similarity). A reorientation of the second hydrophobic stretch occurs after cleavage producing a single reoriented transmembrane domain (By similarity). These events explain the final topology of the protein (By similarity).</text>
</comment>
<comment type="subcellular location">
    <molecule>Viroporin p7</molecule>
    <subcellularLocation>
        <location evidence="6">Host endoplasmic reticulum membrane</location>
        <topology evidence="6">Multi-pass membrane protein</topology>
    </subcellularLocation>
    <subcellularLocation>
        <location evidence="6">Host mitochondrion</location>
    </subcellularLocation>
    <subcellularLocation>
        <location evidence="6">Host cell membrane</location>
    </subcellularLocation>
    <text evidence="6">The C-terminus of p7 membrane domain acts as a signal sequence (By similarity). After cleavage by host signal peptidase, the membrane sequence is retained at the C-terminus of the protein, serving as ER membrane anchor (By similarity). ER retention of p7 is leaky and a small fraction reaches the plasma membrane (By similarity).</text>
</comment>
<comment type="subcellular location">
    <molecule>Protease NS2</molecule>
    <subcellularLocation>
        <location evidence="6">Host endoplasmic reticulum membrane</location>
        <topology evidence="6">Multi-pass membrane protein</topology>
    </subcellularLocation>
    <subcellularLocation>
        <location evidence="13">Host lipid droplet</location>
    </subcellularLocation>
    <text evidence="12">Probably present on the surface of lipid droplets.</text>
</comment>
<comment type="subcellular location">
    <molecule>Serine protease/helicase NS3</molecule>
    <subcellularLocation>
        <location evidence="20">Host endoplasmic reticulum membrane</location>
        <topology evidence="20">Peripheral membrane protein</topology>
    </subcellularLocation>
    <text evidence="20">NS3 is associated to the ER membrane through its binding to NS4A.</text>
</comment>
<comment type="subcellular location">
    <molecule>Non-structural protein 4A</molecule>
    <subcellularLocation>
        <location evidence="20">Host endoplasmic reticulum membrane</location>
        <topology evidence="20">Single-pass type I membrane protein</topology>
    </subcellularLocation>
    <text>Host membrane insertion occurs after processing by the NS3 protease.</text>
</comment>
<comment type="subcellular location">
    <molecule>Non-structural protein 4B</molecule>
    <subcellularLocation>
        <location evidence="6">Host endoplasmic reticulum membrane</location>
        <topology evidence="6">Multi-pass membrane protein</topology>
    </subcellularLocation>
    <text evidence="6">A reorientation of the N-terminus into the ER lumen occurs post-translationally.</text>
</comment>
<comment type="subcellular location">
    <molecule>Non-structural protein 5A</molecule>
    <subcellularLocation>
        <location evidence="6">Host endoplasmic reticulum membrane</location>
        <topology evidence="6">Peripheral membrane protein</topology>
    </subcellularLocation>
    <subcellularLocation>
        <location evidence="6">Host cytoplasm</location>
        <location evidence="6">Host perinuclear region</location>
    </subcellularLocation>
    <subcellularLocation>
        <location evidence="3">Host mitochondrion</location>
    </subcellularLocation>
    <subcellularLocation>
        <location evidence="6">Host cytoplasm</location>
    </subcellularLocation>
    <subcellularLocation>
        <location evidence="3">Host nucleus</location>
    </subcellularLocation>
    <subcellularLocation>
        <location evidence="13">Host lipid droplet</location>
    </subcellularLocation>
    <text evidence="3 6">Host membrane insertion occurs after processing by the NS3 protease (By similarity). Localizes at the surface of lipid droplets (By similarity).</text>
</comment>
<comment type="subcellular location">
    <molecule>RNA-directed RNA polymerase</molecule>
    <subcellularLocation>
        <location evidence="6">Host cytoplasm</location>
    </subcellularLocation>
    <subcellularLocation>
        <location>Host endoplasmic reticulum membrane</location>
        <topology evidence="6">Single-pass type IV membrane protein</topology>
    </subcellularLocation>
    <text evidence="6">Host membrane insertion occurs after processing by the NS3 protease.</text>
</comment>
<comment type="domain">
    <molecule>Envelope glycoprotein E1</molecule>
    <text evidence="6">The transmembrane regions of envelope E1 and E2 glycoproteins are involved in heterodimer formation, ER localization, and assembly of these proteins.</text>
</comment>
<comment type="domain">
    <molecule>Envelope glycoprotein E2</molecule>
    <text evidence="4 6">The transmembrane regions of envelope E1 and E2 glycoproteins are involved in heterodimer formation, ER localization, and assembly of these proteins (By similarity). Envelope E2 glycoprotein contain two highly variable regions called hypervariable region 1 and 2 (HVR1 and HVR2) (By similarity). E2 also contain two segments involved in CD81-binding (By similarity). HVR1 is implicated in the SCARB1-mediated cell entry and probably acts as a regulator of the association of particles with lipids (By similarity).</text>
</comment>
<comment type="domain">
    <molecule>Protease NS2</molecule>
    <text evidence="4">The N-terminus of NS3 is required for the catalytic activity of protease NS2 (By similarity). The minimal catalytic region includes the C-terminus of NS2 and the N-terminus NS3 protease domain (active region NS2-3) (By similarity).</text>
</comment>
<comment type="domain">
    <molecule>Serine protease/helicase NS3</molecule>
    <text evidence="3 6">The N-terminal one-third contains the protease activity (By similarity). This region contains a zinc atom that does not belong to the active site, but may play a structural rather than a catalytic role (By similarity). This region is essential for the activity of protease NS2, maybe by contributing to the folding of the latter (By similarity). The NTPase/helicase activity is located in the twothirds C-terminus of NS3, this domain contains the NTPase and RNA-binding regions (By similarity).</text>
</comment>
<comment type="domain">
    <molecule>Non-structural protein 4B</molecule>
    <text evidence="12">Contains a glycine zipper region that critically contributes to the biogenesis of functional ER-derived replication organelles.</text>
</comment>
<comment type="domain">
    <molecule>Non-structural protein 5A</molecule>
    <text evidence="3 6">The N-terminus of NS5A acts as membrane anchor (By similarity). The central part of NS5A contains a variable region called interferon sensitivity determining region (ISDR) and seems to be intrinsically disordered and interacts with NS5B and host EIF2AK2 (By similarity). The C-terminus of NS5A contains a variable region called variable region 3 (V3) (By similarity). ISDR and V3 may be involved in sensitivity and/or resistance to IFN-alpha therapy (By similarity). The C-terminus contains a nuclear localization signal (By similarity). The SH3-binding domain is involved in the interaction with host BIN1, GRB2 and Src-family kinases (By similarity).</text>
</comment>
<comment type="PTM">
    <molecule>Genome polyprotein</molecule>
    <text evidence="5 6">Specific enzymatic cleavages in vivo yield mature proteins (By similarity). The structural proteins, core, E1, E2 and p7 are produced by proteolytic processing by host signal peptidases (By similarity). The core protein precursor is synthesized as a 23 kDa, which is retained in the ER membrane through the hydrophobic signal peptide (By similarity). Cleavage by the signal peptidase releases the 21 kDa mature core protein (By similarity). The cleavage of the core protein precursor occurs between aminoacids 176 and 188 but the exact cleavage site is not known (By similarity). Some degraded forms of the core protein appear as well during the course of infection (By similarity). The other proteins (p7, NS2, NS3, NS4A, NS4B, NS5A and NS5B) are cleaved by the viral proteases (By similarity). Autoprocessing between NS2 and NS3 is mediated by the NS2 cysteine protease catalytic domain and regulated by the NS3 N-terminal domain (By similarity).</text>
</comment>
<comment type="PTM">
    <molecule>Mature core protein</molecule>
    <text evidence="8">Phosphorylated by host PKC and PKA.</text>
</comment>
<comment type="PTM">
    <molecule>Mature core protein</molecule>
    <text evidence="9">Ubiquitinated; mediated by UBE3A and leading to core protein subsequent proteasomal degradation.</text>
</comment>
<comment type="PTM">
    <molecule>Envelope glycoprotein E1</molecule>
    <text evidence="6">Highly N-glycosylated.</text>
</comment>
<comment type="PTM">
    <molecule>Envelope glycoprotein E2</molecule>
    <text evidence="6">Highly N-glycosylated.</text>
</comment>
<comment type="PTM">
    <molecule>Protease NS2</molecule>
    <text evidence="6">Palmitoylation is required for NS2/3 autoprocessing and E2 recruitment to membranes.</text>
</comment>
<comment type="PTM">
    <molecule>Non-structural protein 4B</molecule>
    <text evidence="6">Palmitoylated. This modification may play a role in its polymerization or in protein-protein interactions.</text>
</comment>
<comment type="PTM">
    <molecule>Non-structural protein 5A</molecule>
    <text evidence="3 5">Phosphorylated on serines in a basal form termed p56 (By similarity). p58 is a hyperphosphorylated form of p56 (By similarity). p56 and p58 coexist in the cell in roughly equivalent amounts (By similarity). Hyperphosphorylation is dependent on the presence of NS4A (By similarity). Host CSNK1A1/CKI-alpha or RPS6KB1 kinases may be responsible for NS5A phosphorylation (By similarity).</text>
</comment>
<comment type="PTM">
    <molecule>Non-structural protein 5A</molecule>
    <text evidence="12">Tyrosine phosphorylation is essential for the interaction with host SRC.</text>
</comment>
<comment type="PTM">
    <molecule>RNA-directed RNA polymerase</molecule>
    <text evidence="3">The N-terminus is phosphorylated by host PRK2/PKN2.</text>
</comment>
<comment type="miscellaneous">
    <text evidence="20">Viral particle assembly takes place at the surface of ER-derived membranes in close proximity to lipid droplets. NS2 associates with E1/E2 glycoproteins, NS3 and NS5A, which interacts with the viral RNA and core protein to promote genome encapsidation. The nucleocapsid buds at the ER membrane where E1/E2 glycoproteins are anchored and afterward associate with nascent lipid droplet to acquire APOE and APOC. Secretion of viral particles is probably regulated by viroporin p7.</text>
</comment>
<comment type="miscellaneous">
    <molecule>Non-structural protein 5A</molecule>
    <text evidence="20">Cell culture adaptation of the virus leads to mutations in NS5A, reducing its inhibitory effect on replication.</text>
</comment>
<comment type="miscellaneous">
    <molecule>Mature core protein</molecule>
    <text evidence="3">Exerts viral interference on hepatitis B virus when HCV and HBV coinfect the same cell, by suppressing HBV gene expression, RNA encapsidation and budding.</text>
</comment>
<comment type="similarity">
    <text evidence="20">Belongs to the hepacivirus polyprotein family.</text>
</comment>
<comment type="caution">
    <text evidence="20">The core gene probably also codes for alternative reading frame proteins (ARFPs). Many functions depicted for the core protein might belong to the ARFPs.</text>
</comment>
<name>POLG_HCVIN</name>
<protein>
    <recommendedName>
        <fullName>Genome polyprotein</fullName>
    </recommendedName>
    <component>
        <recommendedName>
            <fullName>Core protein precursor</fullName>
        </recommendedName>
        <alternativeName>
            <fullName>Capsid protein C</fullName>
        </alternativeName>
        <alternativeName>
            <fullName>p23</fullName>
        </alternativeName>
    </component>
    <component>
        <recommendedName>
            <fullName>Mature core protein</fullName>
        </recommendedName>
        <alternativeName>
            <fullName>p21</fullName>
        </alternativeName>
    </component>
    <component>
        <recommendedName>
            <fullName>Envelope glycoprotein E1</fullName>
        </recommendedName>
        <alternativeName>
            <fullName>gp32</fullName>
        </alternativeName>
        <alternativeName>
            <fullName>gp35</fullName>
        </alternativeName>
    </component>
    <component>
        <recommendedName>
            <fullName>Envelope glycoprotein E2</fullName>
        </recommendedName>
        <alternativeName>
            <fullName>NS1</fullName>
        </alternativeName>
        <alternativeName>
            <fullName>gp68</fullName>
        </alternativeName>
        <alternativeName>
            <fullName>gp70</fullName>
        </alternativeName>
    </component>
    <component>
        <recommendedName>
            <fullName>Viroporin p7</fullName>
        </recommendedName>
    </component>
    <component>
        <recommendedName>
            <fullName>Protease NS2</fullName>
            <shortName>p23</shortName>
            <ecNumber evidence="4">3.4.22.-</ecNumber>
        </recommendedName>
        <alternativeName>
            <fullName>Non-structural protein 2</fullName>
            <shortName>NS2</shortName>
        </alternativeName>
    </component>
    <component>
        <recommendedName>
            <fullName>Serine protease/helicase NS3</fullName>
            <ecNumber evidence="6">3.4.21.98</ecNumber>
            <ecNumber evidence="6">3.6.1.15</ecNumber>
            <ecNumber evidence="6">3.6.4.13</ecNumber>
        </recommendedName>
        <alternativeName>
            <fullName>Hepacivirin</fullName>
        </alternativeName>
        <alternativeName>
            <fullName evidence="6">NS3 helicase</fullName>
        </alternativeName>
        <alternativeName>
            <fullName evidence="6">NS3 protease</fullName>
        </alternativeName>
        <alternativeName>
            <fullName>NS3P</fullName>
        </alternativeName>
        <alternativeName>
            <fullName>Viroporin p70</fullName>
        </alternativeName>
    </component>
    <component>
        <recommendedName>
            <fullName>Non-structural protein 4A</fullName>
            <shortName>NS4A</shortName>
        </recommendedName>
        <alternativeName>
            <fullName>p8</fullName>
        </alternativeName>
    </component>
    <component>
        <recommendedName>
            <fullName>Non-structural protein 4B</fullName>
            <shortName>NS4B</shortName>
        </recommendedName>
        <alternativeName>
            <fullName>p27</fullName>
        </alternativeName>
    </component>
    <component>
        <recommendedName>
            <fullName>Non-structural protein 5A</fullName>
            <shortName>NS5A</shortName>
        </recommendedName>
        <alternativeName>
            <fullName>p56/58</fullName>
        </alternativeName>
    </component>
    <component>
        <recommendedName>
            <fullName>RNA-directed RNA polymerase</fullName>
            <ecNumber evidence="6">2.7.7.48</ecNumber>
        </recommendedName>
        <alternativeName>
            <fullName>NS5B</fullName>
        </alternativeName>
        <alternativeName>
            <fullName>p68</fullName>
        </alternativeName>
    </component>
</protein>
<sequence>MSTNPKPQRKTKRNTNRRPQNVKFPGGGQIVGGVCLLPRRGPRVGVRATRKTSERSQPRGRRQPIPKARRPEGRSWAQPGYPWPLYGNEGCGWAGWLLSPRGSRPSRGPSDPRRRSRNLGKVIDTLTCGFADLMGYIPLVGAPLGGAARALAHGVRVLEDGVNYATGNLPGCSFSIFLLALLSCLTVPASAVEVRNSSGIYHVTNDCPNASVVYETDSLIIHLPGCVPCVREGNASRCWVSLSPTVAAKDPGVPVNEIRRHVDLIVGAAAFCSAMYVGDLCGSIFLVGQLFTLSPRRHWTTQDCNCSIYPGHVTGHRMAWDMMMNWSPTGALVVAQLLRIPQAVLDMIAGAHWGVLAGPAYYSMVGNWAKVLVVLLLFAGVDATTQVTGGTAGRNAYRLASLFSTGPSQNIQLINSNGSWHINRTALNCNDSLHTGWVAALFYSHKFNSSGRPERMASCRPLTAFDQGWGPITYGGKASNDQRPYCWHYAPRPCGIVPAKEVCGPVYCFTPSPVVVGTTDKYGVPTYTWGENETDVLLLNNSRPPIGNWFGCTWMNSTGFTKTCGAPACNVGGSETNTLSCPTDCFRRHPDATYAKCGSGPWLNPRCMVDYPYRLWHYPCTVNYTIFKIRMFVGGIEHRLTAACNWTRGERCDLDDRDRAELSPLLLSTTQWQVLPCSFTTLPALSTGLIHLHQNIVDVQYLYGLSSVVTSWAIRWEYVVLLFLLLADARICACLWMMLLISQVEAALENLIVLNAASLAGTHGIVPFFIFFCAAWYLKGKWAPGLVYSVYGMWPLLLLLLALPQRAYALDQELAASCGAVVFISLAVLTLSPYYKQYMARGIWWLQYMLTRAEALLHVWVPSLNARGGRDGAILLMCVLHPHLLFDITKIMLAILGPLWILQASLLRVPYFVRAHGLIRLCMLVRKTAGGHYVQMALLKLGALTGTYIYNHLSPLQDWAHGSLRDLAVATEPVIFSRMEIKTITWGADTAACGDIINGLPVSARRGREVLLGPADALTDKGWRLLAPITAYAQQTRGLLGCIVTSLTGRDKNQVEGEIQIVSTATQTFLATCINGACWTVYHGAGSRTIASASGPVVRMYTNVDQDLVGWPAPQGARSLTPCTCGASDLYLVTRHADVIPVRRRGDNRGSLLSPRPISYLKGSSGGPLLCPMGHVAGIFRAAVCTRGVAKAVDFVPVESLETTMRSPVFTDNSSPPTVPQSYQVAHLHAPTGSGKSTKVPAAYAAQGYKVLVLNPSVAATLGFGAYMSKAHGIDPNVRTGVRTITTGSPITYSTYGKFLADGGCPGGAYDIIICDECHSVDATSILGIGTVLDQAETAGVRLTVLATATPPGLVTVPHSNIEEVALSADGEKPFYGKAIPLNYIKGGRHLIFCHSKKKCDELAAKLVGLGVNAVAFYRGLDVSVIPTTGDVVVVATDALMTGFTGDFDSVIDCNTCVVQTVDFSLDPIFSIETSTVPQDAVSRSQRRGRTGRGKHGIYRYVSPGERPSGMFDSVVLCECYDAGCAWYELTPAETTVRLRAYLNTPGLPVCQDHLEFWESVFTGLTHIDAHFLSQTKQSGENFPYLVAYQATVCARARAPPPSWDQMWKCLIRLKPTLTGATPLLYRLGSVQNEITLTHPITQYIMACMSADLEVVTSTWVLVGGVLAALAAYCLSTGSVVIVGRIILGGKPAVIPDREVLYREFDEMEECAAHVPYLEQGMHLAGQFKQKALGLLQTASKQAETITPTVRTNWQKLESFWAKHMWNFVSGIQYLAGLSTLPGNPAIASLMSFTAAVTSPLTTQQTLFFNILGGWVAAQLASPAAATAFVGAGITGAVVGSVGLGKVLVDIIAGYGAGVAGALVAFKIMSGETPTTEDLVNLLPAILSPGALVVGVVCAAILRRHVGPGEGAVQWMNRLIAFASRGNHVSPTHYVPESDASARVTQILTSLTVTQLLKRLHVWISSDCIAPCASSWLKDVWDWICEVLSDFKNWLKAKLVPQLPGIPFVSCQRGYRGVWRGEGIVHTRCPCGANITGHVKNGSMRIVGPKTCSNTWRGSFPINAYTTGPCTPSPAPNYTFALWRVSAEEYVEVRRLGDFHYVTGVTTDKLKCPCQVPSPEFFTEVDGVRLHRYAPPCKPLLREEVTFSIGLNEYLVGSQLPCEPEPDVAVLTSMLTDPSHITAETAARRLKRGSPPSLASSSASQLSAPSLKATCTTHHDSPDADLIEANLLWRQEMGGNITRVESENKIVVLDSFDPLVAEEDDREISIPAEILRKFKQFPPAMPIWARPDYNPPLVEPWKRPDYEPPLVHGCPLPPPKPTPVPPPRRKRTVVLDESTVSSALAELATKTFGSSTTSGVTSGEATESSPAPSCGGELDSEAESYSSMPPLEGEPGDPDLSDGSWSTVSSDGGTEDVVCCSMSYSWTGALITPCASEEAKLPINALSNSLLRHHNLVYSTTSRSAGQRQKKVTFDRVQVLDDHYRDVLKEAKAKASTVKARLLSVEEACSLTPPHSARSKFGYGAKDVRSHSSKAIRHINSVWQDLLEDNTTPIDTTIMAKNEVFCVKPEKGGRKPARLIVYPDLGVRVCEKRALYDVVKQLPIAVMGASYGFQYSPAQRVDFLLKAWKSKKVPMGFSYDTRCFDSTVTEADIRTEEDLYQSCDLAPEARIAIRSLTERLYIGGPLTNSKGQNCGYRRCRASGVLTTSCGNTITCFLKASAACRAAKLQDCTMLVCGDDLVVICESAGVQEDAASLRAFTEAMTRYSAPPGDPPQPEYDLELITSCSSNVSVARDGAGKRVYYLTRDPETPLARAAWETARHTPVNSWLGNIIMFAPTLWVRMVLMTHFFSILIAQEHLGKALDCEIYGAVHSVQPLDLPEIIQRLHSLSAFSLHSYSPGEINRVAACLRKLGVPPLRAWRHRARSVRATLLSQGGKAAICGKYLFNWAVKTKLKLTPLPSMSQLDLSNWFTGGYSGGDIYHSVSHARPRLFLWCLLLLSVGVGIYLLPNR</sequence>
<evidence type="ECO:0000250" key="1"/>
<evidence type="ECO:0000250" key="2">
    <source>
        <dbReference type="UniProtKB" id="O92972"/>
    </source>
</evidence>
<evidence type="ECO:0000250" key="3">
    <source>
        <dbReference type="UniProtKB" id="P26662"/>
    </source>
</evidence>
<evidence type="ECO:0000250" key="4">
    <source>
        <dbReference type="UniProtKB" id="P26663"/>
    </source>
</evidence>
<evidence type="ECO:0000250" key="5">
    <source>
        <dbReference type="UniProtKB" id="P26664"/>
    </source>
</evidence>
<evidence type="ECO:0000250" key="6">
    <source>
        <dbReference type="UniProtKB" id="P27958"/>
    </source>
</evidence>
<evidence type="ECO:0000250" key="7">
    <source>
        <dbReference type="UniProtKB" id="P29846"/>
    </source>
</evidence>
<evidence type="ECO:0000250" key="8">
    <source>
        <dbReference type="UniProtKB" id="Q01403"/>
    </source>
</evidence>
<evidence type="ECO:0000250" key="9">
    <source>
        <dbReference type="UniProtKB" id="Q03463"/>
    </source>
</evidence>
<evidence type="ECO:0000250" key="10">
    <source>
        <dbReference type="UniProtKB" id="Q5EG65"/>
    </source>
</evidence>
<evidence type="ECO:0000250" key="11">
    <source>
        <dbReference type="UniProtKB" id="Q913V3"/>
    </source>
</evidence>
<evidence type="ECO:0000250" key="12">
    <source>
        <dbReference type="UniProtKB" id="Q99IB8"/>
    </source>
</evidence>
<evidence type="ECO:0000250" key="13">
    <source>
        <dbReference type="UniProtKB" id="Q9WMX2"/>
    </source>
</evidence>
<evidence type="ECO:0000255" key="14"/>
<evidence type="ECO:0000255" key="15">
    <source>
        <dbReference type="PROSITE-ProRule" id="PRU00539"/>
    </source>
</evidence>
<evidence type="ECO:0000255" key="16">
    <source>
        <dbReference type="PROSITE-ProRule" id="PRU00541"/>
    </source>
</evidence>
<evidence type="ECO:0000255" key="17">
    <source>
        <dbReference type="PROSITE-ProRule" id="PRU01030"/>
    </source>
</evidence>
<evidence type="ECO:0000255" key="18">
    <source>
        <dbReference type="PROSITE-ProRule" id="PRU01166"/>
    </source>
</evidence>
<evidence type="ECO:0000256" key="19">
    <source>
        <dbReference type="SAM" id="MobiDB-lite"/>
    </source>
</evidence>
<evidence type="ECO:0000305" key="20"/>
<keyword id="KW-0007">Acetylation</keyword>
<keyword id="KW-1072">Activation of host autophagy by virus</keyword>
<keyword id="KW-0053">Apoptosis</keyword>
<keyword id="KW-0067">ATP-binding</keyword>
<keyword id="KW-0167">Capsid protein</keyword>
<keyword id="KW-1165">Clathrin-mediated endocytosis of virus by host</keyword>
<keyword id="KW-1015">Disulfide bond</keyword>
<keyword id="KW-1170">Fusion of virus membrane with host endosomal membrane</keyword>
<keyword id="KW-1168">Fusion of virus membrane with host membrane</keyword>
<keyword id="KW-1078">G1/S host cell cycle checkpoint dysregulation by virus</keyword>
<keyword id="KW-0325">Glycoprotein</keyword>
<keyword id="KW-0347">Helicase</keyword>
<keyword id="KW-1032">Host cell membrane</keyword>
<keyword id="KW-1035">Host cytoplasm</keyword>
<keyword id="KW-1038">Host endoplasmic reticulum</keyword>
<keyword id="KW-1041">Host lipid droplet</keyword>
<keyword id="KW-1043">Host membrane</keyword>
<keyword id="KW-1045">Host mitochondrion</keyword>
<keyword id="KW-1048">Host nucleus</keyword>
<keyword id="KW-0945">Host-virus interaction</keyword>
<keyword id="KW-0378">Hydrolase</keyword>
<keyword id="KW-1090">Inhibition of host innate immune response by virus</keyword>
<keyword id="KW-1114">Inhibition of host interferon signaling pathway by virus</keyword>
<keyword id="KW-1097">Inhibition of host MAVS by virus</keyword>
<keyword id="KW-1113">Inhibition of host RLR pathway by virus</keyword>
<keyword id="KW-1105">Inhibition of host STAT1 by virus</keyword>
<keyword id="KW-1110">Inhibition of host TRAFs by virus</keyword>
<keyword id="KW-0922">Interferon antiviral system evasion</keyword>
<keyword id="KW-0407">Ion channel</keyword>
<keyword id="KW-0406">Ion transport</keyword>
<keyword id="KW-1017">Isopeptide bond</keyword>
<keyword id="KW-0449">Lipoprotein</keyword>
<keyword id="KW-0460">Magnesium</keyword>
<keyword id="KW-0472">Membrane</keyword>
<keyword id="KW-0479">Metal-binding</keyword>
<keyword id="KW-1121">Modulation of host cell cycle by virus</keyword>
<keyword id="KW-0511">Multifunctional enzyme</keyword>
<keyword id="KW-0547">Nucleotide-binding</keyword>
<keyword id="KW-0548">Nucleotidyltransferase</keyword>
<keyword id="KW-0553">Oncogene</keyword>
<keyword id="KW-0564">Palmitate</keyword>
<keyword id="KW-0597">Phosphoprotein</keyword>
<keyword id="KW-0645">Protease</keyword>
<keyword id="KW-0687">Ribonucleoprotein</keyword>
<keyword id="KW-0694">RNA-binding</keyword>
<keyword id="KW-0696">RNA-directed RNA polymerase</keyword>
<keyword id="KW-0720">Serine protease</keyword>
<keyword id="KW-0729">SH3-binding</keyword>
<keyword id="KW-0788">Thiol protease</keyword>
<keyword id="KW-0804">Transcription</keyword>
<keyword id="KW-0805">Transcription regulation</keyword>
<keyword id="KW-0808">Transferase</keyword>
<keyword id="KW-0812">Transmembrane</keyword>
<keyword id="KW-1133">Transmembrane helix</keyword>
<keyword id="KW-0813">Transport</keyword>
<keyword id="KW-0832">Ubl conjugation</keyword>
<keyword id="KW-1161">Viral attachment to host cell</keyword>
<keyword id="KW-0261">Viral envelope protein</keyword>
<keyword id="KW-0899">Viral immunoevasion</keyword>
<keyword id="KW-1182">Viral ion channel</keyword>
<keyword id="KW-0543">Viral nucleoprotein</keyword>
<keyword id="KW-1162">Viral penetration into host cytoplasm</keyword>
<keyword id="KW-0693">Viral RNA replication</keyword>
<keyword id="KW-0946">Virion</keyword>
<keyword id="KW-1164">Virus endocytosis by host</keyword>
<keyword id="KW-1160">Virus entry into host cell</keyword>
<keyword id="KW-0862">Zinc</keyword>
<feature type="initiator methionine" description="Removed; by host" evidence="5">
    <location>
        <position position="1"/>
    </location>
</feature>
<feature type="chain" id="PRO_0000450909" description="Genome polyprotein">
    <location>
        <begin position="2"/>
        <end position="3010"/>
    </location>
</feature>
<feature type="chain" id="PRO_0000045580" description="Core protein precursor">
    <location>
        <begin position="2"/>
        <end position="191"/>
    </location>
</feature>
<feature type="chain" id="PRO_0000045581" description="Mature core protein">
    <location>
        <begin position="2"/>
        <end position="177"/>
    </location>
</feature>
<feature type="propeptide" id="PRO_0000045582" description="ER anchor for the core protein, removed in mature form by host signal peptidase">
    <location>
        <begin position="178"/>
        <end position="191"/>
    </location>
</feature>
<feature type="chain" id="PRO_0000045583" description="Envelope glycoprotein E1">
    <location>
        <begin position="192"/>
        <end position="383"/>
    </location>
</feature>
<feature type="chain" id="PRO_0000045584" description="Envelope glycoprotein E2">
    <location>
        <begin position="384"/>
        <end position="746"/>
    </location>
</feature>
<feature type="chain" id="PRO_0000045585" description="Viroporin p7">
    <location>
        <begin position="747"/>
        <end position="809"/>
    </location>
</feature>
<feature type="chain" id="PRO_0000045586" description="Protease NS2" evidence="17">
    <location>
        <begin position="810"/>
        <end position="1026"/>
    </location>
</feature>
<feature type="chain" id="PRO_0000045587" description="Serine protease/helicase NS3">
    <location>
        <begin position="1027"/>
        <end position="1657"/>
    </location>
</feature>
<feature type="chain" id="PRO_0000045588" description="Non-structural protein 4A">
    <location>
        <begin position="1658"/>
        <end position="1711"/>
    </location>
</feature>
<feature type="chain" id="PRO_0000045589" description="Non-structural protein 4B">
    <location>
        <begin position="1712"/>
        <end position="1972"/>
    </location>
</feature>
<feature type="chain" id="PRO_0000045590" description="Non-structural protein 5A">
    <location>
        <begin position="1973"/>
        <end position="2420"/>
    </location>
</feature>
<feature type="chain" id="PRO_0000045591" description="RNA-directed RNA polymerase">
    <location>
        <begin position="2421"/>
        <end position="3011"/>
    </location>
</feature>
<feature type="topological domain" description="Cytoplasmic" evidence="14">
    <location>
        <begin position="2"/>
        <end position="168"/>
    </location>
</feature>
<feature type="transmembrane region" description="Helical" evidence="14">
    <location>
        <begin position="169"/>
        <end position="189"/>
    </location>
</feature>
<feature type="topological domain" description="Lumenal" evidence="6">
    <location>
        <begin position="190"/>
        <end position="358"/>
    </location>
</feature>
<feature type="transmembrane region" description="Helical" evidence="6">
    <location>
        <begin position="359"/>
        <end position="379"/>
    </location>
</feature>
<feature type="topological domain" description="Lumenal" evidence="6">
    <location>
        <begin position="380"/>
        <end position="725"/>
    </location>
</feature>
<feature type="transmembrane region" description="Helical" evidence="6">
    <location>
        <begin position="726"/>
        <end position="746"/>
    </location>
</feature>
<feature type="topological domain" description="Lumenal" evidence="6">
    <location>
        <begin position="747"/>
        <end position="757"/>
    </location>
</feature>
<feature type="transmembrane region" description="Helical" evidence="6">
    <location>
        <begin position="758"/>
        <end position="778"/>
    </location>
</feature>
<feature type="topological domain" description="Cytoplasmic" evidence="6">
    <location>
        <begin position="779"/>
        <end position="781"/>
    </location>
</feature>
<feature type="transmembrane region" description="Helical" evidence="6">
    <location>
        <begin position="782"/>
        <end position="803"/>
    </location>
</feature>
<feature type="topological domain" description="Lumenal" evidence="6">
    <location>
        <begin position="804"/>
        <end position="813"/>
    </location>
</feature>
<feature type="transmembrane region" description="Helical" evidence="13">
    <location>
        <begin position="814"/>
        <end position="834"/>
    </location>
</feature>
<feature type="topological domain" description="Cytoplasmic" evidence="13">
    <location>
        <begin position="835"/>
        <end position="838"/>
    </location>
</feature>
<feature type="transmembrane region" description="Helical" evidence="13">
    <location>
        <begin position="839"/>
        <end position="859"/>
    </location>
</feature>
<feature type="topological domain" description="Lumenal" evidence="13">
    <location>
        <begin position="860"/>
        <end position="881"/>
    </location>
</feature>
<feature type="transmembrane region" description="Helical" evidence="13">
    <location>
        <begin position="882"/>
        <end position="902"/>
    </location>
</feature>
<feature type="topological domain" description="Cytoplasmic" evidence="13">
    <location>
        <begin position="903"/>
        <end position="1657"/>
    </location>
</feature>
<feature type="transmembrane region" description="Helical" evidence="14">
    <location>
        <begin position="1658"/>
        <end position="1678"/>
    </location>
</feature>
<feature type="topological domain" description="Cytoplasmic" evidence="14">
    <location>
        <begin position="1679"/>
        <end position="1805"/>
    </location>
</feature>
<feature type="transmembrane region" description="Helical" evidence="14">
    <location>
        <begin position="1806"/>
        <end position="1824"/>
    </location>
</feature>
<feature type="topological domain" description="Lumenal" evidence="6">
    <location>
        <begin position="1825"/>
        <end position="1828"/>
    </location>
</feature>
<feature type="transmembrane region" description="Helical" evidence="14">
    <location>
        <begin position="1829"/>
        <end position="1849"/>
    </location>
</feature>
<feature type="topological domain" description="Cytoplasmic" evidence="14">
    <location>
        <position position="1850"/>
    </location>
</feature>
<feature type="transmembrane region" description="Helical" evidence="14">
    <location>
        <begin position="1851"/>
        <end position="1871"/>
    </location>
</feature>
<feature type="topological domain" description="Lumenal" evidence="14">
    <location>
        <begin position="1872"/>
        <end position="1881"/>
    </location>
</feature>
<feature type="transmembrane region" description="Helical" evidence="14">
    <location>
        <begin position="1882"/>
        <end position="1902"/>
    </location>
</feature>
<feature type="topological domain" description="Cytoplasmic" evidence="14">
    <location>
        <begin position="1903"/>
        <end position="1972"/>
    </location>
</feature>
<feature type="intramembrane region" evidence="6">
    <location>
        <begin position="1973"/>
        <end position="2002"/>
    </location>
</feature>
<feature type="topological domain" description="Cytoplasmic" evidence="6">
    <location>
        <begin position="2003"/>
        <end position="2990"/>
    </location>
</feature>
<feature type="transmembrane region" description="Helical" evidence="6">
    <location>
        <begin position="2991"/>
        <end position="3011"/>
    </location>
</feature>
<feature type="domain" description="Peptidase C18" evidence="17">
    <location>
        <begin position="903"/>
        <end position="1026"/>
    </location>
</feature>
<feature type="domain" description="Peptidase S29" evidence="18">
    <location>
        <begin position="1027"/>
        <end position="1208"/>
    </location>
</feature>
<feature type="domain" description="Helicase ATP-binding" evidence="16">
    <location>
        <begin position="1217"/>
        <end position="1369"/>
    </location>
</feature>
<feature type="domain" description="RdRp catalytic" evidence="15">
    <location>
        <begin position="2634"/>
        <end position="2752"/>
    </location>
</feature>
<feature type="region of interest" description="Disordered" evidence="6">
    <location>
        <begin position="2"/>
        <end position="75"/>
    </location>
</feature>
<feature type="region of interest" description="Interaction with DDX3X" evidence="10">
    <location>
        <begin position="2"/>
        <end position="59"/>
    </location>
</feature>
<feature type="region of interest" description="Interaction with EIF2AK2/PKR" evidence="3">
    <location>
        <begin position="2"/>
        <end position="58"/>
    </location>
</feature>
<feature type="region of interest" description="Interaction with STAT1" evidence="3">
    <location>
        <begin position="2"/>
        <end position="23"/>
    </location>
</feature>
<feature type="region of interest" description="Important for endoplasmic reticulum and mitochondrial localization" evidence="3">
    <location>
        <begin position="112"/>
        <end position="152"/>
    </location>
</feature>
<feature type="region of interest" description="Interaction with APOA2" evidence="7">
    <location>
        <begin position="122"/>
        <end position="173"/>
    </location>
</feature>
<feature type="region of interest" description="Important for lipid droplets localization" evidence="6">
    <location>
        <begin position="164"/>
        <end position="167"/>
    </location>
</feature>
<feature type="region of interest" description="Important for fusion" evidence="6">
    <location>
        <begin position="265"/>
        <end position="296"/>
    </location>
</feature>
<feature type="region of interest" description="HVR1" evidence="6">
    <location>
        <begin position="385"/>
        <end position="411"/>
    </location>
</feature>
<feature type="region of interest" description="HVR2" evidence="6">
    <location>
        <begin position="474"/>
        <end position="479"/>
    </location>
</feature>
<feature type="region of interest" description="CD81-binding 1" evidence="4">
    <location>
        <begin position="480"/>
        <end position="493"/>
    </location>
</feature>
<feature type="region of interest" description="CD81-binding 2" evidence="4">
    <location>
        <begin position="544"/>
        <end position="551"/>
    </location>
</feature>
<feature type="region of interest" description="PKR/eIF2-alpha phosphorylation homology domain (PePHD)" evidence="1">
    <location>
        <begin position="660"/>
        <end position="671"/>
    </location>
</feature>
<feature type="region of interest" description="Protease NS2-3" evidence="4">
    <location>
        <begin position="904"/>
        <end position="1206"/>
    </location>
</feature>
<feature type="region of interest" description="Interaction with host SCPS1" evidence="12">
    <location>
        <begin position="929"/>
        <end position="949"/>
    </location>
</feature>
<feature type="region of interest" description="RNA-binding" evidence="4">
    <location>
        <begin position="1486"/>
        <end position="1497"/>
    </location>
</feature>
<feature type="region of interest" description="NS3-binding" evidence="6">
    <location>
        <begin position="1679"/>
        <end position="1690"/>
    </location>
</feature>
<feature type="region of interest" description="Transcriptional activation" evidence="14">
    <location>
        <begin position="2120"/>
        <end position="2332"/>
    </location>
</feature>
<feature type="region of interest" description="FKBP8-binding" evidence="3">
    <location>
        <begin position="2120"/>
        <end position="2208"/>
    </location>
</feature>
<feature type="region of interest" description="Interaction with non-structural protein 4A" evidence="3">
    <location>
        <begin position="2135"/>
        <end position="2139"/>
    </location>
</feature>
<feature type="region of interest" description="Disordered" evidence="19">
    <location>
        <begin position="2187"/>
        <end position="2219"/>
    </location>
</feature>
<feature type="region of interest" description="Interaction with host SKP2" evidence="6">
    <location>
        <begin position="2189"/>
        <end position="2441"/>
    </location>
</feature>
<feature type="region of interest" description="Interaction with EIF2AK2/PKR" evidence="4">
    <location>
        <begin position="2210"/>
        <end position="2275"/>
    </location>
</feature>
<feature type="region of interest" description="ISDR" evidence="3">
    <location>
        <begin position="2210"/>
        <end position="2249"/>
    </location>
</feature>
<feature type="region of interest" description="NS4B-binding" evidence="14">
    <location>
        <begin position="2249"/>
        <end position="2306"/>
    </location>
</feature>
<feature type="region of interest" description="Disordered" evidence="19">
    <location>
        <begin position="2352"/>
        <end position="2409"/>
    </location>
</feature>
<feature type="region of interest" description="V3" evidence="1">
    <location>
        <begin position="2354"/>
        <end position="2377"/>
    </location>
</feature>
<feature type="short sequence motif" description="Nuclear localization signal" evidence="12">
    <location>
        <begin position="5"/>
        <end position="13"/>
    </location>
</feature>
<feature type="short sequence motif" description="Nuclear localization signal" evidence="12">
    <location>
        <begin position="38"/>
        <end position="43"/>
    </location>
</feature>
<feature type="short sequence motif" description="Nuclear localization signal" evidence="12">
    <location>
        <begin position="58"/>
        <end position="64"/>
    </location>
</feature>
<feature type="short sequence motif" description="Nuclear localization signal" evidence="12">
    <location>
        <begin position="66"/>
        <end position="71"/>
    </location>
</feature>
<feature type="short sequence motif" description="DECH box" evidence="12">
    <location>
        <begin position="1316"/>
        <end position="1319"/>
    </location>
</feature>
<feature type="short sequence motif" description="SH3-binding" evidence="14">
    <location>
        <begin position="2322"/>
        <end position="2325"/>
    </location>
</feature>
<feature type="short sequence motif" description="Nuclear localization signal" evidence="3">
    <location>
        <begin position="2326"/>
        <end position="2334"/>
    </location>
</feature>
<feature type="compositionally biased region" description="Basic residues" evidence="19">
    <location>
        <begin position="7"/>
        <end position="16"/>
    </location>
</feature>
<feature type="compositionally biased region" description="Basic residues" evidence="19">
    <location>
        <begin position="58"/>
        <end position="68"/>
    </location>
</feature>
<feature type="compositionally biased region" description="Low complexity" evidence="19">
    <location>
        <begin position="2194"/>
        <end position="2211"/>
    </location>
</feature>
<feature type="compositionally biased region" description="Low complexity" evidence="19">
    <location>
        <begin position="2352"/>
        <end position="2369"/>
    </location>
</feature>
<feature type="active site" description="For protease NS2 activity; shared with dimeric partner" evidence="17">
    <location>
        <position position="952"/>
    </location>
</feature>
<feature type="active site" description="For protease NS2 activity; shared with dimeric partner" evidence="17">
    <location>
        <position position="972"/>
    </location>
</feature>
<feature type="active site" description="For protease NS2 activity; shared with dimeric partner" evidence="17">
    <location>
        <position position="993"/>
    </location>
</feature>
<feature type="active site" description="Charge relay system; for serine protease NS3 activity" evidence="18">
    <location>
        <position position="1083"/>
    </location>
</feature>
<feature type="active site" description="Charge relay system; for serine protease NS3 activity" evidence="18">
    <location>
        <position position="1107"/>
    </location>
</feature>
<feature type="active site" description="Charge relay system; for serine protease NS3 activity" evidence="18">
    <location>
        <position position="1165"/>
    </location>
</feature>
<feature type="binding site" evidence="18">
    <location>
        <position position="1123"/>
    </location>
    <ligand>
        <name>Zn(2+)</name>
        <dbReference type="ChEBI" id="CHEBI:29105"/>
        <label>1</label>
        <note>structural; for NS3 protease activity and NS2/3 auto-cleavage activity</note>
    </ligand>
</feature>
<feature type="binding site" evidence="18">
    <location>
        <position position="1125"/>
    </location>
    <ligand>
        <name>Zn(2+)</name>
        <dbReference type="ChEBI" id="CHEBI:29105"/>
        <label>1</label>
        <note>structural; for NS3 protease activity and NS2/3 auto-cleavage activity</note>
    </ligand>
</feature>
<feature type="binding site" evidence="18">
    <location>
        <position position="1171"/>
    </location>
    <ligand>
        <name>Zn(2+)</name>
        <dbReference type="ChEBI" id="CHEBI:29105"/>
        <label>1</label>
        <note>structural; for NS3 protease activity and NS2/3 auto-cleavage activity</note>
    </ligand>
</feature>
<feature type="binding site" evidence="18">
    <location>
        <position position="1175"/>
    </location>
    <ligand>
        <name>Zn(2+)</name>
        <dbReference type="ChEBI" id="CHEBI:29105"/>
        <label>1</label>
        <note>structural; for NS3 protease activity and NS2/3 auto-cleavage activity</note>
    </ligand>
</feature>
<feature type="binding site" evidence="16">
    <location>
        <begin position="1230"/>
        <end position="1237"/>
    </location>
    <ligand>
        <name>ATP</name>
        <dbReference type="ChEBI" id="CHEBI:30616"/>
    </ligand>
</feature>
<feature type="binding site" evidence="13">
    <location>
        <position position="1237"/>
    </location>
    <ligand>
        <name>Mg(2+)</name>
        <dbReference type="ChEBI" id="CHEBI:18420"/>
        <label>1</label>
        <note>catalytic; for NS3 helicase activity</note>
    </ligand>
</feature>
<feature type="binding site" evidence="13">
    <location>
        <position position="1317"/>
    </location>
    <ligand>
        <name>Mg(2+)</name>
        <dbReference type="ChEBI" id="CHEBI:18420"/>
        <label>1</label>
        <note>catalytic; for NS3 helicase activity</note>
    </ligand>
</feature>
<feature type="binding site" evidence="13">
    <location>
        <position position="2011"/>
    </location>
    <ligand>
        <name>Zn(2+)</name>
        <dbReference type="ChEBI" id="CHEBI:29105"/>
        <label>2</label>
        <note>structural</note>
    </ligand>
</feature>
<feature type="binding site" evidence="13">
    <location>
        <position position="2029"/>
    </location>
    <ligand>
        <name>Zn(2+)</name>
        <dbReference type="ChEBI" id="CHEBI:29105"/>
        <label>2</label>
        <note>structural</note>
    </ligand>
</feature>
<feature type="binding site" evidence="13">
    <location>
        <position position="2031"/>
    </location>
    <ligand>
        <name>Zn(2+)</name>
        <dbReference type="ChEBI" id="CHEBI:29105"/>
        <label>2</label>
        <note>structural</note>
    </ligand>
</feature>
<feature type="binding site" evidence="13">
    <location>
        <position position="2052"/>
    </location>
    <ligand>
        <name>Zn(2+)</name>
        <dbReference type="ChEBI" id="CHEBI:29105"/>
        <label>2</label>
        <note>structural</note>
    </ligand>
</feature>
<feature type="binding site" evidence="4">
    <location>
        <position position="2640"/>
    </location>
    <ligand>
        <name>Mg(2+)</name>
        <dbReference type="ChEBI" id="CHEBI:18420"/>
        <label>2</label>
        <note>catalytic; for RNA-directed RNA polymerase activity</note>
    </ligand>
</feature>
<feature type="binding site" evidence="4">
    <location>
        <position position="2738"/>
    </location>
    <ligand>
        <name>Mg(2+)</name>
        <dbReference type="ChEBI" id="CHEBI:18420"/>
        <label>2</label>
        <note>catalytic; for RNA-directed RNA polymerase activity</note>
    </ligand>
</feature>
<feature type="binding site" evidence="4">
    <location>
        <position position="2739"/>
    </location>
    <ligand>
        <name>Mg(2+)</name>
        <dbReference type="ChEBI" id="CHEBI:18420"/>
        <label>2</label>
        <note>catalytic; for RNA-directed RNA polymerase activity</note>
    </ligand>
</feature>
<feature type="site" description="Cleavage; by host signal peptide peptidase" evidence="3">
    <location>
        <begin position="177"/>
        <end position="178"/>
    </location>
</feature>
<feature type="site" description="Cleavage; by host signal peptidase" evidence="3">
    <location>
        <begin position="191"/>
        <end position="192"/>
    </location>
</feature>
<feature type="site" description="Cleavage; by host signal peptidase" evidence="3">
    <location>
        <begin position="383"/>
        <end position="384"/>
    </location>
</feature>
<feature type="site" description="Cleavage; by host signal peptidase" evidence="1">
    <location>
        <begin position="746"/>
        <end position="747"/>
    </location>
</feature>
<feature type="site" description="Cleavage; by host signal peptidase" evidence="1">
    <location>
        <begin position="809"/>
        <end position="810"/>
    </location>
</feature>
<feature type="site" description="Cleavage; by protease NS2" evidence="17">
    <location>
        <begin position="1026"/>
        <end position="1027"/>
    </location>
</feature>
<feature type="site" description="Cleavage; by serine protease/helicase NS3" evidence="6">
    <location>
        <begin position="1657"/>
        <end position="1658"/>
    </location>
</feature>
<feature type="site" description="Cleavage; by serine protease/helicase NS3" evidence="6">
    <location>
        <begin position="1711"/>
        <end position="1712"/>
    </location>
</feature>
<feature type="site" description="CCleavage; by serine protease/helicase NS3" evidence="6">
    <location>
        <begin position="1972"/>
        <end position="1973"/>
    </location>
</feature>
<feature type="site" description="Cleavage; by serine protease/helicase NS3" evidence="6">
    <location>
        <begin position="2420"/>
        <end position="2421"/>
    </location>
</feature>
<feature type="modified residue" description="N-acetylserine; by host" evidence="11">
    <location>
        <position position="2"/>
    </location>
</feature>
<feature type="modified residue" description="Phosphoserine; by host" evidence="8">
    <location>
        <position position="53"/>
    </location>
</feature>
<feature type="modified residue" description="Phosphoserine; by host" evidence="8">
    <location>
        <position position="99"/>
    </location>
</feature>
<feature type="modified residue" description="Phosphoserine; by host PKA" evidence="8">
    <location>
        <position position="116"/>
    </location>
</feature>
<feature type="modified residue" description="Phosphoserine; by host; in p56" evidence="13">
    <location>
        <position position="2194"/>
    </location>
</feature>
<feature type="modified residue" description="Phosphoserine; by host; in p58" evidence="13">
    <location>
        <position position="2197"/>
    </location>
</feature>
<feature type="modified residue" description="Phosphoserine; by host; in p58" evidence="13">
    <location>
        <position position="2201"/>
    </location>
</feature>
<feature type="modified residue" description="Phosphoserine; by host; in p58" evidence="13">
    <location>
        <position position="2204"/>
    </location>
</feature>
<feature type="modified residue" description="Phosphoserine; by host; in p58" evidence="12">
    <location>
        <position position="2207"/>
    </location>
</feature>
<feature type="modified residue" description="Phosphoserine; by host; in p58" evidence="12">
    <location>
        <position position="2210"/>
    </location>
</feature>
<feature type="modified residue" description="Phosphoserine; by host" evidence="3">
    <location>
        <position position="2449"/>
    </location>
</feature>
<feature type="modified residue" description="Phosphoserine; by host" evidence="3">
    <location>
        <position position="2462"/>
    </location>
</feature>
<feature type="lipid moiety-binding region" description="S-palmitoyl cysteine; by host" evidence="6">
    <location>
        <position position="922"/>
    </location>
</feature>
<feature type="lipid moiety-binding region" description="S-palmitoyl cysteine; by host" evidence="6">
    <location>
        <position position="1968"/>
    </location>
</feature>
<feature type="lipid moiety-binding region" description="S-palmitoyl cysteine; by host" evidence="6">
    <location>
        <position position="1972"/>
    </location>
</feature>
<feature type="glycosylation site" description="N-linked (GlcNAc...) asparagine; by host" evidence="6">
    <location>
        <position position="196"/>
    </location>
</feature>
<feature type="glycosylation site" description="N-linked (GlcNAc...) asparagine; by host" evidence="6">
    <location>
        <position position="209"/>
    </location>
</feature>
<feature type="glycosylation site" description="N-linked (GlcNAc...) asparagine; by host" evidence="6">
    <location>
        <position position="234"/>
    </location>
</feature>
<feature type="glycosylation site" description="N-linked (GlcNAc...) asparagine; by host" evidence="14">
    <location>
        <position position="305"/>
    </location>
</feature>
<feature type="glycosylation site" description="N-linked (GlcNAc...) (high mannose) asparagine; by host" evidence="6">
    <location>
        <position position="417"/>
    </location>
</feature>
<feature type="glycosylation site" description="N-linked (GlcNAc...) (high mannose) asparagine; by host" evidence="6">
    <location>
        <position position="423"/>
    </location>
</feature>
<feature type="glycosylation site" description="N-linked (GlcNAc...) (high mannose) asparagine; by host" evidence="6">
    <location>
        <position position="430"/>
    </location>
</feature>
<feature type="glycosylation site" description="N-linked (GlcNAc...) (high mannose) asparagine; by host" evidence="6">
    <location>
        <position position="448"/>
    </location>
</feature>
<feature type="glycosylation site" description="N-linked (GlcNAc...) (high mannose) asparagine; by host" evidence="6">
    <location>
        <position position="532"/>
    </location>
</feature>
<feature type="glycosylation site" description="N-linked (GlcNAc...) asparagine; by host" evidence="14">
    <location>
        <position position="540"/>
    </location>
</feature>
<feature type="glycosylation site" description="N-linked (GlcNAc...) (high mannose) asparagine; by host" evidence="6">
    <location>
        <position position="556"/>
    </location>
</feature>
<feature type="glycosylation site" description="N-linked (GlcNAc...) (high mannose) asparagine; by host" evidence="6">
    <location>
        <position position="623"/>
    </location>
</feature>
<feature type="glycosylation site" description="N-linked (GlcNAc...) (high mannose) asparagine; by host" evidence="6">
    <location>
        <position position="645"/>
    </location>
</feature>
<feature type="disulfide bond" evidence="6">
    <location>
        <begin position="429"/>
        <end position="552"/>
    </location>
</feature>
<feature type="disulfide bond" evidence="6">
    <location>
        <begin position="486"/>
        <end position="494"/>
    </location>
</feature>
<feature type="disulfide bond" evidence="6">
    <location>
        <begin position="503"/>
        <end position="508"/>
    </location>
</feature>
<feature type="disulfide bond" evidence="6">
    <location>
        <begin position="564"/>
        <end position="569"/>
    </location>
</feature>
<feature type="disulfide bond" evidence="6">
    <location>
        <begin position="581"/>
        <end position="585"/>
    </location>
</feature>
<feature type="disulfide bond" evidence="6">
    <location>
        <begin position="597"/>
        <end position="620"/>
    </location>
</feature>
<feature type="disulfide bond" evidence="6">
    <location>
        <begin position="607"/>
        <end position="644"/>
    </location>
</feature>
<feature type="disulfide bond" evidence="6">
    <location>
        <begin position="652"/>
        <end position="677"/>
    </location>
</feature>
<feature type="cross-link" description="Glycyl lysine isopeptide (Lys-Gly) (interchain with G-Cter in ubiquitin)" evidence="6">
    <location>
        <position position="2350"/>
    </location>
</feature>
<reference key="1">
    <citation type="submission" date="2001-08" db="EMBL/GenBank/DDBJ databases">
        <title>Nucleotide Sequence of Indian strain of Hepatitis C Virus.</title>
        <authorList>
            <person name="Guntaka R.V."/>
            <person name="Munpally S.K."/>
            <person name="Khaja M.N."/>
            <person name="Kota K.K."/>
            <person name="Ramana V.K."/>
            <person name="Swamynathan S.K."/>
            <person name="Sakata Y."/>
            <person name="Habibullah C.M."/>
        </authorList>
    </citation>
    <scope>NUCLEOTIDE SEQUENCE [GENOMIC RNA]</scope>
</reference>
<accession>Q913D4</accession>
<proteinExistence type="inferred from homology"/>
<dbReference type="EC" id="3.4.22.-" evidence="4"/>
<dbReference type="EC" id="3.4.21.98" evidence="6"/>
<dbReference type="EC" id="3.6.1.15" evidence="6"/>
<dbReference type="EC" id="3.6.4.13" evidence="6"/>
<dbReference type="EC" id="2.7.7.48" evidence="6"/>
<dbReference type="EMBL" id="AY051292">
    <property type="protein sequence ID" value="AAK95832.1"/>
    <property type="molecule type" value="Genomic_RNA"/>
</dbReference>
<dbReference type="BMRB" id="Q913D4"/>
<dbReference type="SMR" id="Q913D4"/>
<dbReference type="MEROPS" id="C18.001"/>
<dbReference type="euHCVdb" id="AY051292"/>
<dbReference type="Proteomes" id="UP000008092">
    <property type="component" value="Genome"/>
</dbReference>
<dbReference type="GO" id="GO:0044167">
    <property type="term" value="C:host cell endoplasmic reticulum membrane"/>
    <property type="evidence" value="ECO:0007669"/>
    <property type="project" value="UniProtKB-SubCell"/>
</dbReference>
<dbReference type="GO" id="GO:0044186">
    <property type="term" value="C:host cell lipid droplet"/>
    <property type="evidence" value="ECO:0007669"/>
    <property type="project" value="UniProtKB-SubCell"/>
</dbReference>
<dbReference type="GO" id="GO:0044191">
    <property type="term" value="C:host cell mitochondrial membrane"/>
    <property type="evidence" value="ECO:0007669"/>
    <property type="project" value="UniProtKB-SubCell"/>
</dbReference>
<dbReference type="GO" id="GO:0042025">
    <property type="term" value="C:host cell nucleus"/>
    <property type="evidence" value="ECO:0007669"/>
    <property type="project" value="UniProtKB-SubCell"/>
</dbReference>
<dbReference type="GO" id="GO:0044220">
    <property type="term" value="C:host cell perinuclear region of cytoplasm"/>
    <property type="evidence" value="ECO:0007669"/>
    <property type="project" value="UniProtKB-SubCell"/>
</dbReference>
<dbReference type="GO" id="GO:0020002">
    <property type="term" value="C:host cell plasma membrane"/>
    <property type="evidence" value="ECO:0007669"/>
    <property type="project" value="UniProtKB-SubCell"/>
</dbReference>
<dbReference type="GO" id="GO:0016020">
    <property type="term" value="C:membrane"/>
    <property type="evidence" value="ECO:0007669"/>
    <property type="project" value="UniProtKB-KW"/>
</dbReference>
<dbReference type="GO" id="GO:1990904">
    <property type="term" value="C:ribonucleoprotein complex"/>
    <property type="evidence" value="ECO:0007669"/>
    <property type="project" value="UniProtKB-KW"/>
</dbReference>
<dbReference type="GO" id="GO:0019031">
    <property type="term" value="C:viral envelope"/>
    <property type="evidence" value="ECO:0007669"/>
    <property type="project" value="UniProtKB-KW"/>
</dbReference>
<dbReference type="GO" id="GO:0019013">
    <property type="term" value="C:viral nucleocapsid"/>
    <property type="evidence" value="ECO:0007669"/>
    <property type="project" value="UniProtKB-KW"/>
</dbReference>
<dbReference type="GO" id="GO:0055036">
    <property type="term" value="C:virion membrane"/>
    <property type="evidence" value="ECO:0007669"/>
    <property type="project" value="UniProtKB-SubCell"/>
</dbReference>
<dbReference type="GO" id="GO:0005524">
    <property type="term" value="F:ATP binding"/>
    <property type="evidence" value="ECO:0007669"/>
    <property type="project" value="UniProtKB-KW"/>
</dbReference>
<dbReference type="GO" id="GO:0016887">
    <property type="term" value="F:ATP hydrolysis activity"/>
    <property type="evidence" value="ECO:0007669"/>
    <property type="project" value="RHEA"/>
</dbReference>
<dbReference type="GO" id="GO:0015267">
    <property type="term" value="F:channel activity"/>
    <property type="evidence" value="ECO:0007669"/>
    <property type="project" value="UniProtKB-KW"/>
</dbReference>
<dbReference type="GO" id="GO:0004197">
    <property type="term" value="F:cysteine-type endopeptidase activity"/>
    <property type="evidence" value="ECO:0007669"/>
    <property type="project" value="InterPro"/>
</dbReference>
<dbReference type="GO" id="GO:0003723">
    <property type="term" value="F:RNA binding"/>
    <property type="evidence" value="ECO:0007669"/>
    <property type="project" value="UniProtKB-KW"/>
</dbReference>
<dbReference type="GO" id="GO:0003724">
    <property type="term" value="F:RNA helicase activity"/>
    <property type="evidence" value="ECO:0007669"/>
    <property type="project" value="UniProtKB-EC"/>
</dbReference>
<dbReference type="GO" id="GO:0003968">
    <property type="term" value="F:RNA-directed RNA polymerase activity"/>
    <property type="evidence" value="ECO:0007669"/>
    <property type="project" value="UniProtKB-KW"/>
</dbReference>
<dbReference type="GO" id="GO:0004252">
    <property type="term" value="F:serine-type endopeptidase activity"/>
    <property type="evidence" value="ECO:0007669"/>
    <property type="project" value="InterPro"/>
</dbReference>
<dbReference type="GO" id="GO:0017124">
    <property type="term" value="F:SH3 domain binding"/>
    <property type="evidence" value="ECO:0007669"/>
    <property type="project" value="UniProtKB-KW"/>
</dbReference>
<dbReference type="GO" id="GO:0005198">
    <property type="term" value="F:structural molecule activity"/>
    <property type="evidence" value="ECO:0007669"/>
    <property type="project" value="InterPro"/>
</dbReference>
<dbReference type="GO" id="GO:0008270">
    <property type="term" value="F:zinc ion binding"/>
    <property type="evidence" value="ECO:0007669"/>
    <property type="project" value="InterPro"/>
</dbReference>
<dbReference type="GO" id="GO:0075512">
    <property type="term" value="P:clathrin-dependent endocytosis of virus by host cell"/>
    <property type="evidence" value="ECO:0007669"/>
    <property type="project" value="UniProtKB-KW"/>
</dbReference>
<dbReference type="GO" id="GO:0039654">
    <property type="term" value="P:fusion of virus membrane with host endosome membrane"/>
    <property type="evidence" value="ECO:0007669"/>
    <property type="project" value="UniProtKB-KW"/>
</dbReference>
<dbReference type="GO" id="GO:0034220">
    <property type="term" value="P:monoatomic ion transmembrane transport"/>
    <property type="evidence" value="ECO:0007669"/>
    <property type="project" value="UniProtKB-KW"/>
</dbReference>
<dbReference type="GO" id="GO:0006508">
    <property type="term" value="P:proteolysis"/>
    <property type="evidence" value="ECO:0007669"/>
    <property type="project" value="UniProtKB-KW"/>
</dbReference>
<dbReference type="GO" id="GO:0039520">
    <property type="term" value="P:symbiont-mediated activation of host autophagy"/>
    <property type="evidence" value="ECO:0007669"/>
    <property type="project" value="UniProtKB-KW"/>
</dbReference>
<dbReference type="GO" id="GO:0039645">
    <property type="term" value="P:symbiont-mediated perturbation of host cell cycle G1/S transition checkpoint"/>
    <property type="evidence" value="ECO:0007669"/>
    <property type="project" value="UniProtKB-KW"/>
</dbReference>
<dbReference type="GO" id="GO:0039545">
    <property type="term" value="P:symbiont-mediated suppression of host cytoplasmic pattern recognition receptor signaling pathway via inhibition of MAVS activity"/>
    <property type="evidence" value="ECO:0007669"/>
    <property type="project" value="UniProtKB-KW"/>
</dbReference>
<dbReference type="GO" id="GO:0039563">
    <property type="term" value="P:symbiont-mediated suppression of host JAK-STAT cascade via inhibition of STAT1 activity"/>
    <property type="evidence" value="ECO:0007669"/>
    <property type="project" value="UniProtKB-KW"/>
</dbReference>
<dbReference type="GO" id="GO:0039527">
    <property type="term" value="P:symbiont-mediated suppression of host TRAF-mediated signal transduction"/>
    <property type="evidence" value="ECO:0007669"/>
    <property type="project" value="UniProtKB-KW"/>
</dbReference>
<dbReference type="GO" id="GO:0039502">
    <property type="term" value="P:symbiont-mediated suppression of host type I interferon-mediated signaling pathway"/>
    <property type="evidence" value="ECO:0007669"/>
    <property type="project" value="UniProtKB-KW"/>
</dbReference>
<dbReference type="GO" id="GO:0019087">
    <property type="term" value="P:symbiont-mediated transformation of host cell"/>
    <property type="evidence" value="ECO:0007669"/>
    <property type="project" value="InterPro"/>
</dbReference>
<dbReference type="GO" id="GO:0039694">
    <property type="term" value="P:viral RNA genome replication"/>
    <property type="evidence" value="ECO:0007669"/>
    <property type="project" value="InterPro"/>
</dbReference>
<dbReference type="GO" id="GO:0019062">
    <property type="term" value="P:virion attachment to host cell"/>
    <property type="evidence" value="ECO:0007669"/>
    <property type="project" value="UniProtKB-KW"/>
</dbReference>
<dbReference type="CDD" id="cd20903">
    <property type="entry name" value="HCV_p7"/>
    <property type="match status" value="1"/>
</dbReference>
<dbReference type="CDD" id="cd23202">
    <property type="entry name" value="Hepacivirus_RdRp"/>
    <property type="match status" value="1"/>
</dbReference>
<dbReference type="CDD" id="cd18806">
    <property type="entry name" value="SF2_C_viral"/>
    <property type="match status" value="1"/>
</dbReference>
<dbReference type="FunFam" id="1.10.820.10:FF:000001">
    <property type="entry name" value="Genome polyprotein"/>
    <property type="match status" value="1"/>
</dbReference>
<dbReference type="FunFam" id="2.20.25.220:FF:000001">
    <property type="entry name" value="Genome polyprotein"/>
    <property type="match status" value="1"/>
</dbReference>
<dbReference type="FunFam" id="2.40.10.10:FF:000029">
    <property type="entry name" value="Genome polyprotein"/>
    <property type="match status" value="1"/>
</dbReference>
<dbReference type="FunFam" id="2.40.10.120:FF:000003">
    <property type="entry name" value="Genome polyprotein"/>
    <property type="match status" value="1"/>
</dbReference>
<dbReference type="FunFam" id="3.30.160.890:FF:000001">
    <property type="entry name" value="Genome polyprotein"/>
    <property type="match status" value="1"/>
</dbReference>
<dbReference type="FunFam" id="3.30.70.270:FF:000015">
    <property type="entry name" value="Genome polyprotein"/>
    <property type="match status" value="1"/>
</dbReference>
<dbReference type="FunFam" id="3.40.50.300:FF:000557">
    <property type="entry name" value="Genome polyprotein"/>
    <property type="match status" value="1"/>
</dbReference>
<dbReference type="FunFam" id="3.40.50.300:FF:000717">
    <property type="entry name" value="Genome polyprotein"/>
    <property type="match status" value="1"/>
</dbReference>
<dbReference type="Gene3D" id="2.40.10.120">
    <property type="match status" value="1"/>
</dbReference>
<dbReference type="Gene3D" id="3.30.70.270">
    <property type="match status" value="2"/>
</dbReference>
<dbReference type="Gene3D" id="6.10.250.1610">
    <property type="match status" value="1"/>
</dbReference>
<dbReference type="Gene3D" id="6.10.250.1750">
    <property type="match status" value="1"/>
</dbReference>
<dbReference type="Gene3D" id="6.10.250.2920">
    <property type="match status" value="1"/>
</dbReference>
<dbReference type="Gene3D" id="2.20.25.210">
    <property type="entry name" value="Hepatitis C NS5A, domain 1B"/>
    <property type="match status" value="1"/>
</dbReference>
<dbReference type="Gene3D" id="4.10.710.10">
    <property type="entry name" value="Hepatitis C Virus Capsid Protein, Chain A"/>
    <property type="match status" value="1"/>
</dbReference>
<dbReference type="Gene3D" id="3.30.160.890">
    <property type="entry name" value="Hepatitis C virus envelope glycoprotein E1, chain C"/>
    <property type="match status" value="1"/>
</dbReference>
<dbReference type="Gene3D" id="2.30.30.710">
    <property type="entry name" value="Hepatitis C virus non-structural protein NS2, C-terminal domain"/>
    <property type="match status" value="1"/>
</dbReference>
<dbReference type="Gene3D" id="1.20.1280.150">
    <property type="entry name" value="Hepatitis C virus non-structural protein NS2, N-terminal domain"/>
    <property type="match status" value="1"/>
</dbReference>
<dbReference type="Gene3D" id="2.20.25.220">
    <property type="entry name" value="Hepatitis C virus NS5A, 1B domain"/>
    <property type="match status" value="1"/>
</dbReference>
<dbReference type="Gene3D" id="3.40.50.300">
    <property type="entry name" value="P-loop containing nucleotide triphosphate hydrolases"/>
    <property type="match status" value="2"/>
</dbReference>
<dbReference type="Gene3D" id="1.10.820.10">
    <property type="entry name" value="RNA Helicase Chain A , domain 3"/>
    <property type="match status" value="1"/>
</dbReference>
<dbReference type="Gene3D" id="2.40.10.10">
    <property type="entry name" value="Trypsin-like serine proteases"/>
    <property type="match status" value="1"/>
</dbReference>
<dbReference type="InterPro" id="IPR043502">
    <property type="entry name" value="DNA/RNA_pol_sf"/>
</dbReference>
<dbReference type="InterPro" id="IPR011492">
    <property type="entry name" value="Flavi_DEAD"/>
</dbReference>
<dbReference type="InterPro" id="IPR002521">
    <property type="entry name" value="HCV_Core_C"/>
</dbReference>
<dbReference type="InterPro" id="IPR044896">
    <property type="entry name" value="HCV_core_chain_A"/>
</dbReference>
<dbReference type="InterPro" id="IPR002522">
    <property type="entry name" value="HCV_core_N"/>
</dbReference>
<dbReference type="InterPro" id="IPR002519">
    <property type="entry name" value="HCV_Env"/>
</dbReference>
<dbReference type="InterPro" id="IPR002531">
    <property type="entry name" value="HCV_NS1"/>
</dbReference>
<dbReference type="InterPro" id="IPR002518">
    <property type="entry name" value="HCV_NS2"/>
</dbReference>
<dbReference type="InterPro" id="IPR042205">
    <property type="entry name" value="HCV_NS2_C"/>
</dbReference>
<dbReference type="InterPro" id="IPR042209">
    <property type="entry name" value="HCV_NS2_N"/>
</dbReference>
<dbReference type="InterPro" id="IPR000745">
    <property type="entry name" value="HCV_NS4a"/>
</dbReference>
<dbReference type="InterPro" id="IPR001490">
    <property type="entry name" value="HCV_NS4b"/>
</dbReference>
<dbReference type="InterPro" id="IPR002868">
    <property type="entry name" value="HCV_NS5a"/>
</dbReference>
<dbReference type="InterPro" id="IPR013192">
    <property type="entry name" value="HCV_NS5A_1a"/>
</dbReference>
<dbReference type="InterPro" id="IPR013193">
    <property type="entry name" value="HCV_NS5a_1B_dom"/>
</dbReference>
<dbReference type="InterPro" id="IPR038568">
    <property type="entry name" value="HCV_NS5A_1B_sf"/>
</dbReference>
<dbReference type="InterPro" id="IPR024350">
    <property type="entry name" value="HCV_NS5a_C"/>
</dbReference>
<dbReference type="InterPro" id="IPR049913">
    <property type="entry name" value="HCV_p7"/>
</dbReference>
<dbReference type="InterPro" id="IPR014001">
    <property type="entry name" value="Helicase_ATP-bd"/>
</dbReference>
<dbReference type="InterPro" id="IPR001650">
    <property type="entry name" value="Helicase_C-like"/>
</dbReference>
<dbReference type="InterPro" id="IPR004109">
    <property type="entry name" value="HepC_NS3_protease"/>
</dbReference>
<dbReference type="InterPro" id="IPR054175">
    <property type="entry name" value="NS3_helicase_C"/>
</dbReference>
<dbReference type="InterPro" id="IPR038170">
    <property type="entry name" value="NS5A_1a_sf"/>
</dbReference>
<dbReference type="InterPro" id="IPR027417">
    <property type="entry name" value="P-loop_NTPase"/>
</dbReference>
<dbReference type="InterPro" id="IPR009003">
    <property type="entry name" value="Peptidase_S1_PA"/>
</dbReference>
<dbReference type="InterPro" id="IPR043504">
    <property type="entry name" value="Peptidase_S1_PA_chymotrypsin"/>
</dbReference>
<dbReference type="InterPro" id="IPR043128">
    <property type="entry name" value="Rev_trsase/Diguanyl_cyclase"/>
</dbReference>
<dbReference type="InterPro" id="IPR007094">
    <property type="entry name" value="RNA-dir_pol_PSvirus"/>
</dbReference>
<dbReference type="InterPro" id="IPR002166">
    <property type="entry name" value="RNA_pol_HCV"/>
</dbReference>
<dbReference type="Pfam" id="PF07652">
    <property type="entry name" value="Flavi_DEAD"/>
    <property type="match status" value="1"/>
</dbReference>
<dbReference type="Pfam" id="PF01543">
    <property type="entry name" value="HCV_capsid"/>
    <property type="match status" value="1"/>
</dbReference>
<dbReference type="Pfam" id="PF01542">
    <property type="entry name" value="HCV_core"/>
    <property type="match status" value="1"/>
</dbReference>
<dbReference type="Pfam" id="PF01539">
    <property type="entry name" value="HCV_env"/>
    <property type="match status" value="1"/>
</dbReference>
<dbReference type="Pfam" id="PF01560">
    <property type="entry name" value="HCV_NS1"/>
    <property type="match status" value="1"/>
</dbReference>
<dbReference type="Pfam" id="PF01538">
    <property type="entry name" value="HCV_NS2"/>
    <property type="match status" value="1"/>
</dbReference>
<dbReference type="Pfam" id="PF01006">
    <property type="entry name" value="HCV_NS4a"/>
    <property type="match status" value="1"/>
</dbReference>
<dbReference type="Pfam" id="PF01001">
    <property type="entry name" value="HCV_NS4b"/>
    <property type="match status" value="1"/>
</dbReference>
<dbReference type="Pfam" id="PF01506">
    <property type="entry name" value="HCV_NS5a"/>
    <property type="match status" value="1"/>
</dbReference>
<dbReference type="Pfam" id="PF08300">
    <property type="entry name" value="HCV_NS5a_1a"/>
    <property type="match status" value="1"/>
</dbReference>
<dbReference type="Pfam" id="PF08301">
    <property type="entry name" value="HCV_NS5a_1b"/>
    <property type="match status" value="1"/>
</dbReference>
<dbReference type="Pfam" id="PF12941">
    <property type="entry name" value="HCV_NS5a_C"/>
    <property type="match status" value="1"/>
</dbReference>
<dbReference type="Pfam" id="PF22027">
    <property type="entry name" value="NS3_helicase_C"/>
    <property type="match status" value="1"/>
</dbReference>
<dbReference type="Pfam" id="PF02907">
    <property type="entry name" value="Peptidase_S29"/>
    <property type="match status" value="1"/>
</dbReference>
<dbReference type="Pfam" id="PF00998">
    <property type="entry name" value="RdRP_3"/>
    <property type="match status" value="1"/>
</dbReference>
<dbReference type="SMART" id="SM00487">
    <property type="entry name" value="DEXDc"/>
    <property type="match status" value="1"/>
</dbReference>
<dbReference type="SUPFAM" id="SSF56672">
    <property type="entry name" value="DNA/RNA polymerases"/>
    <property type="match status" value="1"/>
</dbReference>
<dbReference type="SUPFAM" id="SSF52540">
    <property type="entry name" value="P-loop containing nucleoside triphosphate hydrolases"/>
    <property type="match status" value="2"/>
</dbReference>
<dbReference type="SUPFAM" id="SSF50494">
    <property type="entry name" value="Trypsin-like serine proteases"/>
    <property type="match status" value="1"/>
</dbReference>
<dbReference type="PROSITE" id="PS51693">
    <property type="entry name" value="HCV_NS2_PRO"/>
    <property type="match status" value="1"/>
</dbReference>
<dbReference type="PROSITE" id="PS51192">
    <property type="entry name" value="HELICASE_ATP_BIND_1"/>
    <property type="match status" value="1"/>
</dbReference>
<dbReference type="PROSITE" id="PS51194">
    <property type="entry name" value="HELICASE_CTER"/>
    <property type="match status" value="1"/>
</dbReference>
<dbReference type="PROSITE" id="PS51822">
    <property type="entry name" value="HV_PV_NS3_PRO"/>
    <property type="match status" value="1"/>
</dbReference>
<dbReference type="PROSITE" id="PS50507">
    <property type="entry name" value="RDRP_SSRNA_POS"/>
    <property type="match status" value="1"/>
</dbReference>
<organism>
    <name type="scientific">Hepatitis C virus genotype 1c (isolate India)</name>
    <name type="common">HCV</name>
    <dbReference type="NCBI Taxonomy" id="356386"/>
    <lineage>
        <taxon>Viruses</taxon>
        <taxon>Riboviria</taxon>
        <taxon>Orthornavirae</taxon>
        <taxon>Kitrinoviricota</taxon>
        <taxon>Flasuviricetes</taxon>
        <taxon>Amarillovirales</taxon>
        <taxon>Flaviviridae</taxon>
        <taxon>Hepacivirus</taxon>
        <taxon>Hepacivirus hominis</taxon>
    </lineage>
</organism>
<organismHost>
    <name type="scientific">Homo sapiens</name>
    <name type="common">Human</name>
    <dbReference type="NCBI Taxonomy" id="9606"/>
</organismHost>